<feature type="chain" id="PRO_0000154553" description="Interferon regulatory factor 3">
    <location>
        <begin position="1"/>
        <end position="427"/>
    </location>
</feature>
<feature type="DNA-binding region" description="IRF tryptophan pentad repeat" evidence="2">
    <location>
        <begin position="5"/>
        <end position="111"/>
    </location>
</feature>
<feature type="region of interest" description="Disordered" evidence="3">
    <location>
        <begin position="91"/>
        <end position="136"/>
    </location>
</feature>
<feature type="region of interest" description="Mediates interaction with ZDHHC11" evidence="34">
    <location>
        <begin position="141"/>
        <end position="427"/>
    </location>
</feature>
<feature type="region of interest" description="Interaction with HERC5" evidence="21">
    <location>
        <begin position="200"/>
        <end position="360"/>
    </location>
</feature>
<feature type="short sequence motif" description="Nuclear export signal">
    <location>
        <begin position="139"/>
        <end position="149"/>
    </location>
</feature>
<feature type="compositionally biased region" description="Basic and acidic residues" evidence="3">
    <location>
        <begin position="91"/>
        <end position="107"/>
    </location>
</feature>
<feature type="site" description="Cleavage; by CASP3" evidence="39">
    <location>
        <begin position="121"/>
        <end position="122"/>
    </location>
</feature>
<feature type="site" description="Cleavage; by CASP3" evidence="39">
    <location>
        <begin position="125"/>
        <end position="126"/>
    </location>
</feature>
<feature type="modified residue" description="Phosphothreonine" evidence="26">
    <location>
        <position position="3"/>
    </location>
</feature>
<feature type="modified residue" description="Phosphoserine" evidence="26">
    <location>
        <position position="14"/>
    </location>
</feature>
<feature type="modified residue" description="Phosphothreonine" evidence="26">
    <location>
        <position position="75"/>
    </location>
</feature>
<feature type="modified residue" description="Phosphoserine" evidence="26">
    <location>
        <position position="97"/>
    </location>
</feature>
<feature type="modified residue" description="Phosphoserine" evidence="1">
    <location>
        <position position="123"/>
    </location>
</feature>
<feature type="modified residue" description="(Microbial infection) Phosphoserine" evidence="27">
    <location>
        <position position="175"/>
    </location>
</feature>
<feature type="modified residue" description="Phosphothreonine" evidence="26">
    <location>
        <position position="180"/>
    </location>
</feature>
<feature type="modified residue" description="Phosphoserine" evidence="26">
    <location>
        <position position="188"/>
    </location>
</feature>
<feature type="modified residue" description="Phosphothreonine" evidence="26">
    <location>
        <position position="237"/>
    </location>
</feature>
<feature type="modified residue" description="Phosphothreonine" evidence="26">
    <location>
        <position position="244"/>
    </location>
</feature>
<feature type="modified residue" description="Phosphothreonine" evidence="26">
    <location>
        <position position="253"/>
    </location>
</feature>
<feature type="modified residue" description="N6-acetyllysine" evidence="1">
    <location>
        <position position="366"/>
    </location>
</feature>
<feature type="modified residue" description="Phosphoserine" evidence="24">
    <location>
        <position position="385"/>
    </location>
</feature>
<feature type="modified residue" description="Diphosphoserine" evidence="47">
    <location>
        <position position="386"/>
    </location>
</feature>
<feature type="modified residue" description="Phosphoserine; by TBK1" evidence="24 26 32 47">
    <location>
        <position position="386"/>
    </location>
</feature>
<feature type="modified residue" description="Phosphoserine; by IKKE and TBK1" evidence="24 25 32 47">
    <location>
        <position position="396"/>
    </location>
</feature>
<feature type="modified residue" description="Phosphoserine" evidence="26">
    <location>
        <position position="398"/>
    </location>
</feature>
<feature type="modified residue" description="Phosphothreonine" evidence="26">
    <location>
        <position position="404"/>
    </location>
</feature>
<feature type="modified residue" description="Phosphoserine" evidence="26">
    <location>
        <position position="427"/>
    </location>
</feature>
<feature type="disulfide bond" evidence="11 12">
    <location>
        <begin position="267"/>
        <end position="289"/>
    </location>
</feature>
<feature type="cross-link" description="Glycyl lysine isopeptide (Lys-Gly) (interchain with G-Cter in ISG15)" evidence="21">
    <location>
        <position position="193"/>
    </location>
</feature>
<feature type="cross-link" description="Glycyl lysine isopeptide (Lys-Gly) (interchain with G-Cter in ISG15)" evidence="21">
    <location>
        <position position="360"/>
    </location>
</feature>
<feature type="cross-link" description="Glycyl lysine isopeptide (Lys-Gly) (interchain with G-Cter in ISG15)" evidence="21">
    <location>
        <position position="366"/>
    </location>
</feature>
<feature type="splice variant" id="VSP_046911" description="In isoform 3." evidence="59">
    <location>
        <begin position="1"/>
        <end position="146"/>
    </location>
</feature>
<feature type="splice variant" id="VSP_047690" description="In isoform 5." evidence="59">
    <original>AWAEATGAYVPGRDKPDLPTWKRNFRSALNRKEGLRLAEDRSKDPHDPH</original>
    <variation>ELGTFPSQTPLRTPMVEAVLLIPRKTFWMSYWVTWCWPHSQIRDPQAWL</variation>
    <location>
        <begin position="56"/>
        <end position="104"/>
    </location>
</feature>
<feature type="splice variant" id="VSP_047691" description="In isoform 5." evidence="59">
    <location>
        <begin position="105"/>
        <end position="427"/>
    </location>
</feature>
<feature type="splice variant" id="VSP_043319" description="In isoform 2 and isoform 3." evidence="59">
    <location>
        <begin position="201"/>
        <end position="327"/>
    </location>
</feature>
<feature type="splice variant" id="VSP_046912" description="In isoform 4." evidence="53">
    <original>DLITFTEGSGRSPRYALWFCVGESWPQDQPWTKRLVMVKVVPTCLRALVEMARVGGASSLENTVDLHISNSHPLSLTSDQYKAYLQDLVEGMDFQGPGES</original>
    <variation>GSWAPRSDYLHGRKRTLTTLCPLVLCGGVMAPGPAVDQEARDGQGCAHVPQGLGRNGPGRGCLLPGEYCGPAHFQQPPTLPHLRPVQGLPAGLGGGHGFPGPWGELSPRSSWCASNPPVPHHLNQ</variation>
    <location>
        <begin position="328"/>
        <end position="427"/>
    </location>
</feature>
<feature type="sequence variant" id="VAR_084069" description="Decreased IFNB induction upon Sendai virus infection." evidence="43">
    <location>
        <position position="49"/>
    </location>
</feature>
<feature type="sequence variant" id="VAR_011901" description="In dbSNP:rs968457.">
    <original>R</original>
    <variation>Q</variation>
    <location>
        <position position="96"/>
    </location>
</feature>
<feature type="sequence variant" id="VAR_049643" description="In dbSNP:rs34745118.">
    <original>Y</original>
    <variation>F</variation>
    <location>
        <position position="107"/>
    </location>
</feature>
<feature type="sequence variant" id="VAR_084070" description="Decreased IFNB induction upon Sendai virus infection." evidence="43">
    <location>
        <begin position="145"/>
        <end position="200"/>
    </location>
</feature>
<feature type="sequence variant" id="VAR_084071" description="Decreased IFNB induction upon Sendai virus infection." evidence="43">
    <original>N</original>
    <variation>K</variation>
    <location>
        <position position="146"/>
    </location>
</feature>
<feature type="sequence variant" id="VAR_084072" description="No effect on IFNB induction upon Sendai virus infection." evidence="43">
    <original>R</original>
    <variation>Q</variation>
    <location>
        <position position="227"/>
    </location>
</feature>
<feature type="sequence variant" id="VAR_075805" description="In IIAE7; loss of viral infection-induced phosphorylation at S-386; loss of viral infection-induced homodimerization; loss of viral infection-induced transcription factor activity; unable to activate interferon transcription in response to viral infection; decreased IFNB induction upon Sendai virus infection; dbSNP:rs750526659." evidence="30 43">
    <original>R</original>
    <variation>Q</variation>
    <location>
        <position position="285"/>
    </location>
</feature>
<feature type="sequence variant" id="VAR_011902" description="In dbSNP:rs1049486.">
    <original>E</original>
    <variation>K</variation>
    <location>
        <position position="377"/>
    </location>
</feature>
<feature type="sequence variant" id="VAR_084073" description="No effect on IFNB induction upon Sendai virus infection." evidence="43">
    <original>L</original>
    <variation>V</variation>
    <location>
        <position position="401"/>
    </location>
</feature>
<feature type="sequence variant" id="VAR_011903" description="In dbSNP:rs7251." evidence="13 51">
    <original>S</original>
    <variation>T</variation>
    <location>
        <position position="427"/>
    </location>
</feature>
<feature type="mutagenesis site" description="Abolishes nuclear localization." evidence="4">
    <original>KR</original>
    <variation>NG</variation>
    <location>
        <begin position="77"/>
        <end position="78"/>
    </location>
</feature>
<feature type="mutagenesis site" description="No effect on subcellular localization." evidence="4">
    <original>RK</original>
    <variation>LQ</variation>
    <location>
        <begin position="86"/>
        <end position="87"/>
    </location>
</feature>
<feature type="mutagenesis site" description="Does not affect cleavage by CASP3." evidence="39">
    <original>D</original>
    <variation>A</variation>
    <location>
        <position position="116"/>
    </location>
</feature>
<feature type="mutagenesis site" description="Abolished cleavage by CASP3." evidence="39">
    <original>DTSPD</original>
    <variation>ATSPA</variation>
    <location>
        <begin position="121"/>
        <end position="125"/>
    </location>
</feature>
<feature type="mutagenesis site" description="Abolishes nuclear export." evidence="4">
    <original>IL</original>
    <variation>MM</variation>
    <location>
        <begin position="139"/>
        <end position="140"/>
    </location>
</feature>
<feature type="mutagenesis site" description="Highly diminished ISGylation; when associated with R-360 and R-366." evidence="21">
    <original>K</original>
    <variation>R</variation>
    <location>
        <position position="193"/>
    </location>
</feature>
<feature type="mutagenesis site" description="Abolished interaction with STING1, MAVS or TICAM1." evidence="32">
    <original>R</original>
    <variation>S</variation>
    <location>
        <position position="285"/>
    </location>
</feature>
<feature type="mutagenesis site" description="Decreased interaction with TICAM1." evidence="32">
    <original>H</original>
    <variation>S</variation>
    <location>
        <position position="288"/>
    </location>
</feature>
<feature type="mutagenesis site" description="Decreased interaction with TICAM1." evidence="32">
    <original>H</original>
    <variation>S</variation>
    <location>
        <position position="290"/>
    </location>
</feature>
<feature type="mutagenesis site" description="Abolished interaction with STING1, MAVS or TICAM1." evidence="32">
    <original>K</original>
    <variation>S</variation>
    <location>
        <position position="313"/>
    </location>
</feature>
<feature type="mutagenesis site" description="Highly diminished ISGylation; when associated with R-193 and R-366." evidence="21">
    <original>K</original>
    <variation>R</variation>
    <location>
        <position position="360"/>
    </location>
</feature>
<feature type="mutagenesis site" description="Highly diminished ISGylation; when associated with R-193 and R-360." evidence="21">
    <original>K</original>
    <variation>R</variation>
    <location>
        <position position="366"/>
    </location>
</feature>
<feature type="mutagenesis site" description="Complete loss of viral infection induced phosphorylation." evidence="50">
    <original>SS</original>
    <variation>AA</variation>
    <location>
        <begin position="385"/>
        <end position="386"/>
    </location>
</feature>
<feature type="mutagenesis site" description="Complete loss of viral infection induced phosphorylation." evidence="5 24 29">
    <original>S</original>
    <variation>A</variation>
    <variation>D</variation>
    <variation>E</variation>
    <location>
        <position position="385"/>
    </location>
</feature>
<feature type="mutagenesis site" description="Complete loss of viral infection induced phosphorylation. Abolished pyrophosphorylation." evidence="5 24 26 29 47">
    <original>S</original>
    <variation>A</variation>
    <location>
        <position position="386"/>
    </location>
</feature>
<feature type="mutagenesis site" description="Phosphomimetic mutant; interacts with CREBBP; when associated with E-396." evidence="32">
    <original>S</original>
    <variation>E</variation>
    <location>
        <position position="386"/>
    </location>
</feature>
<feature type="mutagenesis site" description="Does not affect pyrophosphorylation." evidence="47">
    <original>T</original>
    <variation>A</variation>
    <location>
        <position position="390"/>
    </location>
</feature>
<feature type="mutagenesis site" description="Complete loss of viral infection induced phosphorylation." evidence="50">
    <original>SNSHPLSLTS</original>
    <variation>ANAHPLALAA</variation>
    <location>
        <begin position="396"/>
        <end position="405"/>
    </location>
</feature>
<feature type="mutagenesis site" description="Acts as a constitutively activated IRF3." evidence="50">
    <original>SNSHPLSLTS</original>
    <variation>DNDHPLDLDD</variation>
    <location>
        <begin position="396"/>
        <end position="405"/>
    </location>
</feature>
<feature type="mutagenesis site" description="Complete loss of viral infection induced phosphorylation.">
    <original>SNS</original>
    <variation>ANA</variation>
    <location>
        <begin position="396"/>
        <end position="398"/>
    </location>
</feature>
<feature type="mutagenesis site" description="Phosphomimetic mutant; interacts with CREBBP; when associated with E-386." evidence="32">
    <original>S</original>
    <variation>E</variation>
    <location>
        <position position="396"/>
    </location>
</feature>
<feature type="mutagenesis site" description="Complete loss of viral infection induced phosphorylation.">
    <original>SLTS</original>
    <variation>ALAA</variation>
    <location>
        <begin position="402"/>
        <end position="405"/>
    </location>
</feature>
<feature type="sequence conflict" description="In Ref. 3; BAG37040." evidence="60" ref="3">
    <original>L</original>
    <variation>F</variation>
    <location>
        <position position="196"/>
    </location>
</feature>
<feature type="helix" evidence="73">
    <location>
        <begin position="8"/>
        <end position="18"/>
    </location>
</feature>
<feature type="strand" evidence="70">
    <location>
        <begin position="25"/>
        <end position="27"/>
    </location>
</feature>
<feature type="strand" evidence="72">
    <location>
        <begin position="28"/>
        <end position="31"/>
    </location>
</feature>
<feature type="strand" evidence="73">
    <location>
        <begin position="33"/>
        <end position="37"/>
    </location>
</feature>
<feature type="strand" evidence="71">
    <location>
        <begin position="41"/>
        <end position="45"/>
    </location>
</feature>
<feature type="helix" evidence="72">
    <location>
        <begin position="49"/>
        <end position="51"/>
    </location>
</feature>
<feature type="helix" evidence="73">
    <location>
        <begin position="53"/>
        <end position="60"/>
    </location>
</feature>
<feature type="strand" evidence="70">
    <location>
        <begin position="66"/>
        <end position="69"/>
    </location>
</feature>
<feature type="helix" evidence="73">
    <location>
        <begin position="73"/>
        <end position="85"/>
    </location>
</feature>
<feature type="strand" evidence="73">
    <location>
        <begin position="90"/>
        <end position="96"/>
    </location>
</feature>
<feature type="strand" evidence="73">
    <location>
        <begin position="100"/>
        <end position="102"/>
    </location>
</feature>
<feature type="strand" evidence="73">
    <location>
        <begin position="104"/>
        <end position="109"/>
    </location>
</feature>
<feature type="helix" evidence="78">
    <location>
        <begin position="137"/>
        <end position="143"/>
    </location>
</feature>
<feature type="helix" evidence="75">
    <location>
        <begin position="191"/>
        <end position="196"/>
    </location>
</feature>
<feature type="strand" evidence="75">
    <location>
        <begin position="204"/>
        <end position="210"/>
    </location>
</feature>
<feature type="strand" evidence="75">
    <location>
        <begin position="213"/>
        <end position="220"/>
    </location>
</feature>
<feature type="strand" evidence="75">
    <location>
        <begin position="226"/>
        <end position="229"/>
    </location>
</feature>
<feature type="strand" evidence="75">
    <location>
        <begin position="238"/>
        <end position="244"/>
    </location>
</feature>
<feature type="helix" evidence="79">
    <location>
        <begin position="248"/>
        <end position="250"/>
    </location>
</feature>
<feature type="strand" evidence="74">
    <location>
        <begin position="252"/>
        <end position="254"/>
    </location>
</feature>
<feature type="helix" evidence="75">
    <location>
        <begin position="255"/>
        <end position="266"/>
    </location>
</feature>
<feature type="turn" evidence="69">
    <location>
        <begin position="267"/>
        <end position="270"/>
    </location>
</feature>
<feature type="strand" evidence="75">
    <location>
        <begin position="272"/>
        <end position="277"/>
    </location>
</feature>
<feature type="strand" evidence="75">
    <location>
        <begin position="280"/>
        <end position="285"/>
    </location>
</feature>
<feature type="strand" evidence="75">
    <location>
        <begin position="287"/>
        <end position="289"/>
    </location>
</feature>
<feature type="strand" evidence="75">
    <location>
        <begin position="291"/>
        <end position="297"/>
    </location>
</feature>
<feature type="strand" evidence="76">
    <location>
        <begin position="304"/>
        <end position="306"/>
    </location>
</feature>
<feature type="strand" evidence="75">
    <location>
        <begin position="308"/>
        <end position="310"/>
    </location>
</feature>
<feature type="strand" evidence="75">
    <location>
        <begin position="313"/>
        <end position="315"/>
    </location>
</feature>
<feature type="strand" evidence="75">
    <location>
        <begin position="317"/>
        <end position="321"/>
    </location>
</feature>
<feature type="helix" evidence="75">
    <location>
        <begin position="322"/>
        <end position="333"/>
    </location>
</feature>
<feature type="strand" evidence="75">
    <location>
        <begin position="343"/>
        <end position="350"/>
    </location>
</feature>
<feature type="strand" evidence="79">
    <location>
        <begin position="354"/>
        <end position="356"/>
    </location>
</feature>
<feature type="helix" evidence="75">
    <location>
        <begin position="358"/>
        <end position="360"/>
    </location>
</feature>
<feature type="strand" evidence="75">
    <location>
        <begin position="361"/>
        <end position="369"/>
    </location>
</feature>
<feature type="helix" evidence="75">
    <location>
        <begin position="370"/>
        <end position="383"/>
    </location>
</feature>
<feature type="strand" evidence="75">
    <location>
        <begin position="384"/>
        <end position="391"/>
    </location>
</feature>
<feature type="strand" evidence="77">
    <location>
        <begin position="395"/>
        <end position="397"/>
    </location>
</feature>
<feature type="strand" evidence="75">
    <location>
        <begin position="401"/>
        <end position="404"/>
    </location>
</feature>
<feature type="helix" evidence="75">
    <location>
        <begin position="405"/>
        <end position="417"/>
    </location>
</feature>
<name>IRF3_HUMAN</name>
<gene>
    <name evidence="58 62" type="primary">IRF3</name>
</gene>
<comment type="function">
    <text evidence="16 24 27 28 29 32 40 41 43 44 47 49 52 54 55 56">Key transcriptional regulator of type I interferon (IFN)-dependent immune responses which plays a critical role in the innate immune response against DNA and RNA viruses (PubMed:22394562, PubMed:24049179, PubMed:25636800, PubMed:27302953, PubMed:31340999, PubMed:36603579, PubMed:8524823). Regulates the transcription of type I IFN genes (IFN-alpha and IFN-beta) and IFN-stimulated genes (ISG) by binding to an interferon-stimulated response element (ISRE) in their promoters (PubMed:11846977, PubMed:16846591, PubMed:16979567, PubMed:20049431, PubMed:32972995, PubMed:36603579, PubMed:8524823). Acts as a more potent activator of the IFN-beta (IFNB) gene than the IFN-alpha (IFNA) gene and plays a critical role in both the early and late phases of the IFNA/B gene induction (PubMed:16846591, PubMed:16979567, PubMed:20049431, PubMed:36603579). Found in an inactive form in the cytoplasm of uninfected cells and following viral infection, double-stranded RNA (dsRNA), or toll-like receptor (TLR) signaling, is phosphorylated by IKBKE and TBK1 kinases (PubMed:22394562, PubMed:25636800, PubMed:27302953, PubMed:36603579). This induces a conformational change, leading to its dimerization and nuclear localization and association with CREB binding protein (CREBBP) to form dsRNA-activated factor 1 (DRAF1), a complex which activates the transcription of the type I IFN and ISG genes (PubMed:16154084, PubMed:27302953, PubMed:33440148, PubMed:36603579). Can activate distinct gene expression programs in macrophages and can induce significant apoptosis in primary macrophages (PubMed:16846591). In response to Sendai virus infection, is recruited by TOMM70:HSP90AA1 to mitochondrion and forms an apoptosis complex TOMM70:HSP90AA1:IRF3:BAX inducing apoptosis (PubMed:25609812). Key transcription factor regulating the IFN response during SARS-CoV-2 infection (PubMed:33440148).</text>
</comment>
<comment type="activity regulation">
    <text evidence="29 32 44 47 54 55 56">In the absence of viral infection, maintained as a monomer in an autoinhibited state (PubMed:16846591, PubMed:16979567, PubMed:20049431). Phosphorylation by TBK1 and IKBKE disrupts this autoinhibition leading to the liberation of the DNA-binding and dimerization activities and its nuclear localization where it can activate type I IFN and ISG genes (PubMed:25636800). Phosphorylation and activation follow the following steps: innate adapter proteins, such as MAVS, STING1 or TICAM1, are first activated by viral RNA, cytosolic DNA and bacterial lipopolysaccharide (LPS), respectively, leading to activation of the kinases TBK1 and IKBKE (PubMed:25636800, PubMed:36603579). These kinases then phosphorylate the adapter proteins on their pLxIS motif, leading to recruitment of IRF3, thereby licensing IRF3 for phosphorylation by TBK1 (PubMed:25636800, PubMed:36603579). Phosphorylated IRF3 dissociates from the adapter proteins, dimerizes, and then enters the nucleus to induce IFNs (PubMed:25636800, PubMed:27302953).</text>
</comment>
<comment type="activity regulation">
    <text evidence="44">(Microbial infection) Activated upon coronavirus SARS-CoV-2 infection.</text>
</comment>
<comment type="subunit">
    <text evidence="9 10 14 15 16 17 18 19 20 21 22 24 25 28 29 31 32 33 34 36 40 41 45 47 54 55 56">Monomer (PubMed:16846591, PubMed:16979567, PubMed:20049431, PubMed:36603579). Homodimer; phosphorylation-induced (PubMed:22394562, PubMed:25636800, PubMed:26347139, PubMed:36603579). Interacts (when phosphorylated) with CREBBP (PubMed:16154084, PubMed:27302953). Interacts with MAVS (via phosphorylated pLxIS motif) (PubMed:16153868, PubMed:25636800, PubMed:27302953). Interacts with TICAM1 (via phosphorylated pLxIS motif) (PubMed:12471095, PubMed:14739303, PubMed:25636800, PubMed:27302953). Interacts with STING1 (via phosphorylated pLxIS motif) (PubMed:22394562, PubMed:25636800, PubMed:27302953, PubMed:28331227). Interacts with IKBKE and TBK1 (PubMed:16281057, PubMed:23478265, PubMed:25636800). Interacts with TICAM2 (PubMed:14517278). Interacts with RBCK1 (PubMed:18711448). Interacts with HERC5 (PubMed:20308324). Interacts with DDX3X (phosphorylated at 'Ser-102'); the interaction allows the phosphorylation and activation of IRF3 by IKBKE (PubMed:23478265, PubMed:27980081). Interacts with TRIM21 and ULK1, in the presence of TRIM21; this interaction leads to IRF3 degradation by autophagy (PubMed:18641315, PubMed:26347139). Interacts with RIOK3; RIOK3 probably mediates the interaction of TBK1 with IRF3 (PubMed:19557502). Interacts with ILRUN; the interaction inhibits IRF3 binding to its DNA consensus sequence (PubMed:29802199). Interacts with LYAR; this interaction impairs IRF3 DNA-binding activity (PubMed:31413131). Interacts with TRAF3 (PubMed:27980081). Interacts with ZDHHC11; ZDHHC11 recruits IRF3 to STING1 upon DNA virus infection and thereby promotes IRF3 activation (PubMed:28331227). Interacts with HSP90AA1; the interaction mediates IRF3 association with TOMM70 (PubMed:20628368, PubMed:25609812). Interacts with BCL2; the interaction decreases upon Sendai virus infection (PubMed:25609812). Interacts with BAX; the interaction is direct, increases upon Sendai virus infection and mediates the formation of the apoptosis complex TOMM70:HSP90AA1:IRF3:BAX (PubMed:25609812). Interacts with DDX56 (PubMed:31340999). Interacts with NBR1 (PubMed:35914352).</text>
</comment>
<comment type="subunit">
    <text evidence="8 32">(Microbial infection) Interacts with rotavirus A NSP1 (via pLxIS motif); this interaction leads to the proteasome-dependent degradation of IRF3.</text>
</comment>
<comment type="subunit">
    <text evidence="7">(Microbial infection) Interacts with herpes virus 8/HHV-8 protein VIRF1 (PubMed:11314014).</text>
</comment>
<comment type="subunit">
    <text evidence="35">(Microbial infection) Interacts with Seneca Valley virus protease 3C; this interaction is involved in the suppression of IRF3 expression and phosphorylation by the virus.</text>
</comment>
<comment type="subunit">
    <text evidence="37">(Microbial infection) Interacts with herpes virus 2/HHV-2 protein ICP27; this interaction inhibits IRF3 phosphorylation and nuclear translocation.</text>
</comment>
<comment type="subunit">
    <text evidence="38">(Microbial infection) Interacts with human cytomegalovirus protein UL44; this interaction prevents IRF3 binding to its promoters.</text>
</comment>
<comment type="subunit">
    <text evidence="46">(Microbial infection) Interacts with the two fragments of MERS-COV protein N produced by CASP6 through proteolytic cleavage; both interactions inhibit IRF3 nuclear translocation after activation and IFN signaling.</text>
</comment>
<comment type="interaction">
    <interactant intactId="EBI-2650369">
        <id>Q14653</id>
    </interactant>
    <interactant intactId="EBI-81215">
        <id>Q92793</id>
        <label>CREBBP</label>
    </interactant>
    <organismsDiffer>false</organismsDiffer>
    <experiments>12</experiments>
</comment>
<comment type="interaction">
    <interactant intactId="EBI-2650369">
        <id>Q14653</id>
    </interactant>
    <interactant intactId="EBI-5349621">
        <id>Q9Y3R0</id>
        <label>GRIP1</label>
    </interactant>
    <organismsDiffer>false</organismsDiffer>
    <experiments>2</experiments>
</comment>
<comment type="interaction">
    <interactant intactId="EBI-2650369">
        <id>Q14653</id>
    </interactant>
    <interactant intactId="EBI-307369">
        <id>Q14164</id>
        <label>IKBKE</label>
    </interactant>
    <organismsDiffer>false</organismsDiffer>
    <experiments>2</experiments>
</comment>
<comment type="interaction">
    <interactant intactId="EBI-2650369">
        <id>Q14653</id>
    </interactant>
    <interactant intactId="EBI-1055781">
        <id>P10914</id>
        <label>IRF1</label>
    </interactant>
    <organismsDiffer>false</organismsDiffer>
    <experiments>5</experiments>
</comment>
<comment type="interaction">
    <interactant intactId="EBI-2650369">
        <id>Q14653</id>
    </interactant>
    <interactant intactId="EBI-2650369">
        <id>Q14653</id>
        <label>IRF3</label>
    </interactant>
    <organismsDiffer>false</organismsDiffer>
    <experiments>18</experiments>
</comment>
<comment type="interaction">
    <interactant intactId="EBI-2650369">
        <id>Q14653</id>
    </interactant>
    <interactant intactId="EBI-746466">
        <id>P05161</id>
        <label>ISG15</label>
    </interactant>
    <organismsDiffer>false</organismsDiffer>
    <experiments>2</experiments>
</comment>
<comment type="interaction">
    <interactant intactId="EBI-2650369">
        <id>Q14653</id>
    </interactant>
    <interactant intactId="EBI-349938">
        <id>P52292</id>
        <label>KPNA2</label>
    </interactant>
    <organismsDiffer>false</organismsDiffer>
    <experiments>2</experiments>
</comment>
<comment type="interaction">
    <interactant intactId="EBI-2650369">
        <id>Q14653</id>
    </interactant>
    <interactant intactId="EBI-359923">
        <id>O60684</id>
        <label>KPNA6</label>
    </interactant>
    <organismsDiffer>false</organismsDiffer>
    <experiments>3</experiments>
</comment>
<comment type="interaction">
    <interactant intactId="EBI-2650369">
        <id>Q14653</id>
    </interactant>
    <interactant intactId="EBI-3649340">
        <id>Q9Y5Q3</id>
        <label>MAFB</label>
    </interactant>
    <organismsDiffer>false</organismsDiffer>
    <experiments>4</experiments>
</comment>
<comment type="interaction">
    <interactant intactId="EBI-2650369">
        <id>Q14653</id>
    </interactant>
    <interactant intactId="EBI-712311">
        <id>P67775</id>
        <label>PPP2CA</label>
    </interactant>
    <organismsDiffer>false</organismsDiffer>
    <experiments>4</experiments>
</comment>
<comment type="interaction">
    <interactant intactId="EBI-2650369">
        <id>Q14653</id>
    </interactant>
    <interactant intactId="EBI-491274">
        <id>P06400</id>
        <label>RB1</label>
    </interactant>
    <organismsDiffer>false</organismsDiffer>
    <experiments>2</experiments>
</comment>
<comment type="interaction">
    <interactant intactId="EBI-2650369">
        <id>Q14653</id>
    </interactant>
    <interactant intactId="EBI-971402">
        <id>P28749</id>
        <label>RBL1</label>
    </interactant>
    <organismsDiffer>false</organismsDiffer>
    <experiments>2</experiments>
</comment>
<comment type="interaction">
    <interactant intactId="EBI-2650369">
        <id>Q14653</id>
    </interactant>
    <interactant intactId="EBI-1047061">
        <id>O14730</id>
        <label>RIOK3</label>
    </interactant>
    <organismsDiffer>false</organismsDiffer>
    <experiments>6</experiments>
</comment>
<comment type="interaction">
    <interactant intactId="EBI-2650369">
        <id>Q14653</id>
    </interactant>
    <interactant intactId="EBI-347996">
        <id>O43765</id>
        <label>SGTA</label>
    </interactant>
    <organismsDiffer>false</organismsDiffer>
    <experiments>3</experiments>
</comment>
<comment type="interaction">
    <interactant intactId="EBI-2650369">
        <id>Q14653</id>
    </interactant>
    <interactant intactId="EBI-356402">
        <id>Q9UHD2</id>
        <label>TBK1</label>
    </interactant>
    <organismsDiffer>false</organismsDiffer>
    <experiments>10</experiments>
</comment>
<comment type="interaction">
    <interactant intactId="EBI-2650369">
        <id>Q14653</id>
    </interactant>
    <interactant intactId="EBI-25474079">
        <id>PRO_0000037311</id>
        <label>rep</label>
        <dbReference type="UniProtKB" id="P0C6X7"/>
    </interactant>
    <organismsDiffer>true</organismsDiffer>
    <experiments>5</experiments>
</comment>
<comment type="subcellular location">
    <subcellularLocation>
        <location evidence="4 28 40 41 46 47 48 61">Cytoplasm</location>
    </subcellularLocation>
    <subcellularLocation>
        <location evidence="4 40 41 46 47 48 61">Nucleus</location>
    </subcellularLocation>
    <subcellularLocation>
        <location evidence="28">Mitochondrion</location>
    </subcellularLocation>
    <text evidence="4 28 46">Shuttles between cytoplasmic and nuclear compartments, with export being the prevailing effect (PubMed:10805757, PubMed:35922005). When activated, IRF3 interaction with CREBBP prevents its export to the cytoplasm (PubMed:10805757). Recruited to mitochondria via TOMM70:HSP90AA1 upon Sendai virus infection (PubMed:25609812).</text>
</comment>
<comment type="alternative products">
    <event type="alternative splicing"/>
    <isoform>
        <id>Q14653-1</id>
        <name>1</name>
        <sequence type="displayed"/>
    </isoform>
    <isoform>
        <id>Q14653-2</id>
        <name>2</name>
        <sequence type="described" ref="VSP_043319"/>
    </isoform>
    <isoform>
        <id>Q14653-3</id>
        <name>3</name>
        <sequence type="described" ref="VSP_046911 VSP_043319"/>
    </isoform>
    <isoform>
        <id>Q14653-4</id>
        <name>4</name>
        <sequence type="described" ref="VSP_046912"/>
    </isoform>
    <isoform>
        <id>Q14653-5</id>
        <name>5</name>
        <sequence type="described" ref="VSP_047690 VSP_047691"/>
    </isoform>
</comment>
<comment type="tissue specificity">
    <text evidence="49">Expressed constitutively in a variety of tissues.</text>
</comment>
<comment type="PTM">
    <text evidence="24 25 26 29 47">Constitutively phosphorylated on many Ser/Thr residues (PubMed:22394562, PubMed:23478265, PubMed:23746807). Activated following phosphorylation by TBK1 and IKBKE (PubMed:23478265, PubMed:23746807, PubMed:25636800, PubMed:36603579). Innate adapter proteins, such as MAVS, STING1 or TICAM1, are first activated by viral RNA, cytosolic DNA, and bacterial lipopolysaccharide (LPS), respectively, leading to activation of the kinases TBK1 and IKBKE (PubMed:25636800). These kinases then phosphorylate the adapter proteins on the pLxIS motif, leading to recruitment of IRF3, thereby licensing IRF3 for phosphorylation by TBK1 (PubMed:25636800). Phosphorylation at Ser-386 is followed by pyrophosphorylation at the same residue, promoting phosphorylation at Ser-396 (PubMed:36603579). Phosphorylated IRF3 dissociates from the adapter proteins, dimerizes, and then enters the nucleus to induce IFNs (PubMed:25636800, PubMed:36603579).</text>
</comment>
<comment type="PTM">
    <text evidence="47">Pyrophosphorylated by UAP1 following phosphorylation at Ser-386 by TBK1 (PubMed:36603579). Pyrophosphorylation promotes subsequent phosphorylation at Ser-396, leading to homodimerization of IRF3 (PubMed:36603579).</text>
</comment>
<comment type="PTM">
    <text evidence="1">Acetylation at Lys-366 by KAT8 inhibits recruimtent to promoters and transcription factor activity. Acetylation by KAT8 is promoted by phosphorylation at Ser-396.</text>
</comment>
<comment type="PTM">
    <text evidence="18 19 23 48">Ubiquitinated; ubiquitination involves RBCK1 leading to proteasomal degradation (PubMed:18711448). Polyubiquitinated; ubiquitination involves TRIM21 leading to proteasomal degradation (PubMed:18641315). Ubiquitinated by UBE3C, leading to its degradation (PubMed:21167755). Deubiquitinated by USP5 on both 'Lys-48'-linked unanchored and 'Lys-63'-linked anchored polyubiquitin, leading to inhibition of anti-RNA viral innate immunity (PubMed:39761299).</text>
</comment>
<comment type="PTM">
    <text evidence="18 19 21">ISGylated by HERC5 resulting in sustained IRF3 activation and in the inhibition of IRF3 ubiquitination by disrupting PIN1 binding. The phosphorylation state of IRF3 does not alter ISGylation.</text>
</comment>
<comment type="PTM">
    <text evidence="39">Proteolytically cleaved by apoptotic caspases during apoptosis, leading to its inactivation (PubMed:30878284). Cleavage by CASP3 during virus-induced apoptosis inactivates it, preventing cytokine overproduction (PubMed:30878284).</text>
</comment>
<comment type="PTM">
    <text evidence="42">(Microbial infection) ISGylated. ISGylation is cleaved and removed by SARS-COV-2 nsp3 which attenuates type I interferon responses.</text>
</comment>
<comment type="PTM">
    <text evidence="6">(Microbial infection) Phosphorylation and subsequent activation of IRF3 is inhibited by vaccinia virus protein E3.</text>
</comment>
<comment type="PTM">
    <text evidence="27">(Microbial infection) Phosphorylated by herpes simplex virus 1/HHV-1 US3 at Ser-175 to prevent IRF3 activation.</text>
</comment>
<comment type="disease" evidence="30">
    <disease id="DI-04529">
        <name>Encephalopathy, acute, infection-induced, 7, herpes-specific</name>
        <acronym>IIAE7</acronym>
        <description>A rare complication of human herpesvirus 1 (HHV-1) infection, occurring in only a small minority of HHV-1 infected individuals. It is characterized by hemorrhagic necrosis of parts of the temporal and frontal lobes. Onset is over several days and involves fever, headache, seizures, stupor, and often coma, frequently with a fatal outcome.</description>
        <dbReference type="MIM" id="616532"/>
    </disease>
    <text>Disease susceptibility is associated with variants affecting the gene represented in this entry.</text>
</comment>
<comment type="similarity">
    <text evidence="2">Belongs to the IRF family.</text>
</comment>
<reference key="1">
    <citation type="journal article" date="1995" name="Proc. Natl. Acad. Sci. U.S.A.">
        <title>Identification of a member of the interferon regulatory factor family that binds to the interferon-stimulated response element and activates expression of interferon-induced genes.</title>
        <authorList>
            <person name="Au W.W.-C."/>
            <person name="Moore P.P.A."/>
            <person name="Lowther W.W."/>
            <person name="Juang Y.-T."/>
            <person name="Pitha P.M."/>
        </authorList>
    </citation>
    <scope>NUCLEOTIDE SEQUENCE [MRNA] (ISOFORM 1)</scope>
    <scope>FUNCTION</scope>
    <scope>TISSUE SPECIFICITY</scope>
    <source>
        <tissue>Retina</tissue>
    </source>
</reference>
<reference key="2">
    <citation type="submission" date="2003-02" db="EMBL/GenBank/DDBJ databases">
        <title>IRF3 mRNA, nirs splice variants.</title>
        <authorList>
            <person name="Tabata Y."/>
            <person name="Sameshima E."/>
            <person name="Hayashi A."/>
            <person name="Iida K."/>
            <person name="Mitsuyama M."/>
            <person name="Kanai S."/>
            <person name="Furuya T."/>
            <person name="Saito T."/>
        </authorList>
    </citation>
    <scope>NUCLEOTIDE SEQUENCE [MRNA] (ISOFORMS 2; 3 AND 5)</scope>
</reference>
<reference key="3">
    <citation type="journal article" date="2004" name="Nat. Genet.">
        <title>Complete sequencing and characterization of 21,243 full-length human cDNAs.</title>
        <authorList>
            <person name="Ota T."/>
            <person name="Suzuki Y."/>
            <person name="Nishikawa T."/>
            <person name="Otsuki T."/>
            <person name="Sugiyama T."/>
            <person name="Irie R."/>
            <person name="Wakamatsu A."/>
            <person name="Hayashi K."/>
            <person name="Sato H."/>
            <person name="Nagai K."/>
            <person name="Kimura K."/>
            <person name="Makita H."/>
            <person name="Sekine M."/>
            <person name="Obayashi M."/>
            <person name="Nishi T."/>
            <person name="Shibahara T."/>
            <person name="Tanaka T."/>
            <person name="Ishii S."/>
            <person name="Yamamoto J."/>
            <person name="Saito K."/>
            <person name="Kawai Y."/>
            <person name="Isono Y."/>
            <person name="Nakamura Y."/>
            <person name="Nagahari K."/>
            <person name="Murakami K."/>
            <person name="Yasuda T."/>
            <person name="Iwayanagi T."/>
            <person name="Wagatsuma M."/>
            <person name="Shiratori A."/>
            <person name="Sudo H."/>
            <person name="Hosoiri T."/>
            <person name="Kaku Y."/>
            <person name="Kodaira H."/>
            <person name="Kondo H."/>
            <person name="Sugawara M."/>
            <person name="Takahashi M."/>
            <person name="Kanda K."/>
            <person name="Yokoi T."/>
            <person name="Furuya T."/>
            <person name="Kikkawa E."/>
            <person name="Omura Y."/>
            <person name="Abe K."/>
            <person name="Kamihara K."/>
            <person name="Katsuta N."/>
            <person name="Sato K."/>
            <person name="Tanikawa M."/>
            <person name="Yamazaki M."/>
            <person name="Ninomiya K."/>
            <person name="Ishibashi T."/>
            <person name="Yamashita H."/>
            <person name="Murakawa K."/>
            <person name="Fujimori K."/>
            <person name="Tanai H."/>
            <person name="Kimata M."/>
            <person name="Watanabe M."/>
            <person name="Hiraoka S."/>
            <person name="Chiba Y."/>
            <person name="Ishida S."/>
            <person name="Ono Y."/>
            <person name="Takiguchi S."/>
            <person name="Watanabe S."/>
            <person name="Yosida M."/>
            <person name="Hotuta T."/>
            <person name="Kusano J."/>
            <person name="Kanehori K."/>
            <person name="Takahashi-Fujii A."/>
            <person name="Hara H."/>
            <person name="Tanase T.-O."/>
            <person name="Nomura Y."/>
            <person name="Togiya S."/>
            <person name="Komai F."/>
            <person name="Hara R."/>
            <person name="Takeuchi K."/>
            <person name="Arita M."/>
            <person name="Imose N."/>
            <person name="Musashino K."/>
            <person name="Yuuki H."/>
            <person name="Oshima A."/>
            <person name="Sasaki N."/>
            <person name="Aotsuka S."/>
            <person name="Yoshikawa Y."/>
            <person name="Matsunawa H."/>
            <person name="Ichihara T."/>
            <person name="Shiohata N."/>
            <person name="Sano S."/>
            <person name="Moriya S."/>
            <person name="Momiyama H."/>
            <person name="Satoh N."/>
            <person name="Takami S."/>
            <person name="Terashima Y."/>
            <person name="Suzuki O."/>
            <person name="Nakagawa S."/>
            <person name="Senoh A."/>
            <person name="Mizoguchi H."/>
            <person name="Goto Y."/>
            <person name="Shimizu F."/>
            <person name="Wakebe H."/>
            <person name="Hishigaki H."/>
            <person name="Watanabe T."/>
            <person name="Sugiyama A."/>
            <person name="Takemoto M."/>
            <person name="Kawakami B."/>
            <person name="Yamazaki M."/>
            <person name="Watanabe K."/>
            <person name="Kumagai A."/>
            <person name="Itakura S."/>
            <person name="Fukuzumi Y."/>
            <person name="Fujimori Y."/>
            <person name="Komiyama M."/>
            <person name="Tashiro H."/>
            <person name="Tanigami A."/>
            <person name="Fujiwara T."/>
            <person name="Ono T."/>
            <person name="Yamada K."/>
            <person name="Fujii Y."/>
            <person name="Ozaki K."/>
            <person name="Hirao M."/>
            <person name="Ohmori Y."/>
            <person name="Kawabata A."/>
            <person name="Hikiji T."/>
            <person name="Kobatake N."/>
            <person name="Inagaki H."/>
            <person name="Ikema Y."/>
            <person name="Okamoto S."/>
            <person name="Okitani R."/>
            <person name="Kawakami T."/>
            <person name="Noguchi S."/>
            <person name="Itoh T."/>
            <person name="Shigeta K."/>
            <person name="Senba T."/>
            <person name="Matsumura K."/>
            <person name="Nakajima Y."/>
            <person name="Mizuno T."/>
            <person name="Morinaga M."/>
            <person name="Sasaki M."/>
            <person name="Togashi T."/>
            <person name="Oyama M."/>
            <person name="Hata H."/>
            <person name="Watanabe M."/>
            <person name="Komatsu T."/>
            <person name="Mizushima-Sugano J."/>
            <person name="Satoh T."/>
            <person name="Shirai Y."/>
            <person name="Takahashi Y."/>
            <person name="Nakagawa K."/>
            <person name="Okumura K."/>
            <person name="Nagase T."/>
            <person name="Nomura N."/>
            <person name="Kikuchi H."/>
            <person name="Masuho Y."/>
            <person name="Yamashita R."/>
            <person name="Nakai K."/>
            <person name="Yada T."/>
            <person name="Nakamura Y."/>
            <person name="Ohara O."/>
            <person name="Isogai T."/>
            <person name="Sugano S."/>
        </authorList>
    </citation>
    <scope>NUCLEOTIDE SEQUENCE [LARGE SCALE MRNA] (ISOFORM 1)</scope>
    <scope>VARIANT THR-427</scope>
    <source>
        <tissue>Spleen</tissue>
    </source>
</reference>
<reference key="4">
    <citation type="journal article" date="2004" name="Nature">
        <title>The DNA sequence and biology of human chromosome 19.</title>
        <authorList>
            <person name="Grimwood J."/>
            <person name="Gordon L.A."/>
            <person name="Olsen A.S."/>
            <person name="Terry A."/>
            <person name="Schmutz J."/>
            <person name="Lamerdin J.E."/>
            <person name="Hellsten U."/>
            <person name="Goodstein D."/>
            <person name="Couronne O."/>
            <person name="Tran-Gyamfi M."/>
            <person name="Aerts A."/>
            <person name="Altherr M."/>
            <person name="Ashworth L."/>
            <person name="Bajorek E."/>
            <person name="Black S."/>
            <person name="Branscomb E."/>
            <person name="Caenepeel S."/>
            <person name="Carrano A.V."/>
            <person name="Caoile C."/>
            <person name="Chan Y.M."/>
            <person name="Christensen M."/>
            <person name="Cleland C.A."/>
            <person name="Copeland A."/>
            <person name="Dalin E."/>
            <person name="Dehal P."/>
            <person name="Denys M."/>
            <person name="Detter J.C."/>
            <person name="Escobar J."/>
            <person name="Flowers D."/>
            <person name="Fotopulos D."/>
            <person name="Garcia C."/>
            <person name="Georgescu A.M."/>
            <person name="Glavina T."/>
            <person name="Gomez M."/>
            <person name="Gonzales E."/>
            <person name="Groza M."/>
            <person name="Hammon N."/>
            <person name="Hawkins T."/>
            <person name="Haydu L."/>
            <person name="Ho I."/>
            <person name="Huang W."/>
            <person name="Israni S."/>
            <person name="Jett J."/>
            <person name="Kadner K."/>
            <person name="Kimball H."/>
            <person name="Kobayashi A."/>
            <person name="Larionov V."/>
            <person name="Leem S.-H."/>
            <person name="Lopez F."/>
            <person name="Lou Y."/>
            <person name="Lowry S."/>
            <person name="Malfatti S."/>
            <person name="Martinez D."/>
            <person name="McCready P.M."/>
            <person name="Medina C."/>
            <person name="Morgan J."/>
            <person name="Nelson K."/>
            <person name="Nolan M."/>
            <person name="Ovcharenko I."/>
            <person name="Pitluck S."/>
            <person name="Pollard M."/>
            <person name="Popkie A.P."/>
            <person name="Predki P."/>
            <person name="Quan G."/>
            <person name="Ramirez L."/>
            <person name="Rash S."/>
            <person name="Retterer J."/>
            <person name="Rodriguez A."/>
            <person name="Rogers S."/>
            <person name="Salamov A."/>
            <person name="Salazar A."/>
            <person name="She X."/>
            <person name="Smith D."/>
            <person name="Slezak T."/>
            <person name="Solovyev V."/>
            <person name="Thayer N."/>
            <person name="Tice H."/>
            <person name="Tsai M."/>
            <person name="Ustaszewska A."/>
            <person name="Vo N."/>
            <person name="Wagner M."/>
            <person name="Wheeler J."/>
            <person name="Wu K."/>
            <person name="Xie G."/>
            <person name="Yang J."/>
            <person name="Dubchak I."/>
            <person name="Furey T.S."/>
            <person name="DeJong P."/>
            <person name="Dickson M."/>
            <person name="Gordon D."/>
            <person name="Eichler E.E."/>
            <person name="Pennacchio L.A."/>
            <person name="Richardson P."/>
            <person name="Stubbs L."/>
            <person name="Rokhsar D.S."/>
            <person name="Myers R.M."/>
            <person name="Rubin E.M."/>
            <person name="Lucas S.M."/>
        </authorList>
    </citation>
    <scope>NUCLEOTIDE SEQUENCE [LARGE SCALE GENOMIC DNA]</scope>
</reference>
<reference key="5">
    <citation type="submission" date="2005-07" db="EMBL/GenBank/DDBJ databases">
        <authorList>
            <person name="Mural R.J."/>
            <person name="Istrail S."/>
            <person name="Sutton G.G."/>
            <person name="Florea L."/>
            <person name="Halpern A.L."/>
            <person name="Mobarry C.M."/>
            <person name="Lippert R."/>
            <person name="Walenz B."/>
            <person name="Shatkay H."/>
            <person name="Dew I."/>
            <person name="Miller J.R."/>
            <person name="Flanigan M.J."/>
            <person name="Edwards N.J."/>
            <person name="Bolanos R."/>
            <person name="Fasulo D."/>
            <person name="Halldorsson B.V."/>
            <person name="Hannenhalli S."/>
            <person name="Turner R."/>
            <person name="Yooseph S."/>
            <person name="Lu F."/>
            <person name="Nusskern D.R."/>
            <person name="Shue B.C."/>
            <person name="Zheng X.H."/>
            <person name="Zhong F."/>
            <person name="Delcher A.L."/>
            <person name="Huson D.H."/>
            <person name="Kravitz S.A."/>
            <person name="Mouchard L."/>
            <person name="Reinert K."/>
            <person name="Remington K.A."/>
            <person name="Clark A.G."/>
            <person name="Waterman M.S."/>
            <person name="Eichler E.E."/>
            <person name="Adams M.D."/>
            <person name="Hunkapiller M.W."/>
            <person name="Myers E.W."/>
            <person name="Venter J.C."/>
        </authorList>
    </citation>
    <scope>NUCLEOTIDE SEQUENCE [LARGE SCALE GENOMIC DNA]</scope>
    <scope>VARIANT THR-427</scope>
</reference>
<reference key="6">
    <citation type="journal article" date="2004" name="Genome Res.">
        <title>The status, quality, and expansion of the NIH full-length cDNA project: the Mammalian Gene Collection (MGC).</title>
        <authorList>
            <consortium name="The MGC Project Team"/>
        </authorList>
    </citation>
    <scope>NUCLEOTIDE SEQUENCE [LARGE SCALE MRNA] (ISOFORMS 1 AND 4)</scope>
    <source>
        <tissue>Eye</tissue>
        <tissue>Kidney</tissue>
    </source>
</reference>
<reference key="7">
    <citation type="journal article" date="1998" name="Ann. Hum. Genet.">
        <title>Mapping of human interferon regulatory factor 3 (IRF3) to chromosome 19q13.3-13.4 by an intragenic polymorphic marker.</title>
        <authorList>
            <person name="Bellingham J."/>
            <person name="Gregory-Evans K."/>
            <person name="Gregory-Evans C.Y."/>
        </authorList>
    </citation>
    <scope>NUCLEOTIDE SEQUENCE [GENOMIC DNA] OF 323-413</scope>
</reference>
<reference key="8">
    <citation type="journal article" date="1998" name="Mol. Cell. Biol.">
        <title>Virus-dependent phosphorylation of the IRF-3 transcription factor regulates nuclear translocation, transactivation potential, and proteasome-mediated degradation.</title>
        <authorList>
            <person name="Lin R."/>
            <person name="Heylbroeck C."/>
            <person name="Pitha P.M."/>
            <person name="Hiscott J."/>
        </authorList>
    </citation>
    <scope>MUTAGENESIS OF 385-SER-SER-386 AND 396-SER--SER-405</scope>
</reference>
<reference key="9">
    <citation type="journal article" date="2000" name="J. Biochem.">
        <title>Analyses of virus-induced homomeric and heteromeric protein associations between IRF-3 and coactivator CBP/p300.</title>
        <authorList>
            <person name="Suhara W."/>
            <person name="Yoneyama M."/>
            <person name="Iwamura T."/>
            <person name="Yoshimura S."/>
            <person name="Tamura K."/>
            <person name="Namiki H."/>
            <person name="Aimoto S."/>
            <person name="Fujita T."/>
        </authorList>
    </citation>
    <scope>MUTAGENESIS OF SER-385 AND SER-386</scope>
</reference>
<reference key="10">
    <citation type="journal article" date="2000" name="Mol. Cell. Biol.">
        <title>Regulated nuclear-cytoplasmic localization of interferon regulatory factor 3, a subunit of double-stranded RNA-activated factor 1.</title>
        <authorList>
            <person name="Kumar K.P."/>
            <person name="McBride K.M."/>
            <person name="Weaver B.K."/>
            <person name="Dingwall C."/>
            <person name="Reich N.C."/>
        </authorList>
    </citation>
    <scope>SUBCELLULAR LOCATION</scope>
    <scope>MUTAGENESIS OF 77-LYS-ARG-78; 86-ARG-LYS-87 AND 139-ILE-LEU-140</scope>
</reference>
<reference key="11">
    <citation type="journal article" date="2001" name="J. Biol. Chem.">
        <title>Identification of distinct signaling pathways leading to the phosphorylation of interferon regulatory factor 3.</title>
        <authorList>
            <person name="Servant M.J."/>
            <person name="ten Oever B."/>
            <person name="LePage C."/>
            <person name="Conti L."/>
            <person name="Gessani S."/>
            <person name="Julkunen I."/>
            <person name="Lin R."/>
            <person name="Hiscott J."/>
        </authorList>
    </citation>
    <scope>PHOSPHORYLATION</scope>
</reference>
<reference key="12">
    <citation type="journal article" date="2001" name="J. Biol. Chem.">
        <title>IRF3 and IRF7 phosphorylation in virus-infected cells does not require double-stranded RNA-dependent protein kinase R or Ikappa B kinase but is blocked by Vaccinia virus E3L protein.</title>
        <authorList>
            <person name="Smith E.J."/>
            <person name="Marie I.J."/>
            <person name="Prakash A."/>
            <person name="Garcia-Sastre A."/>
            <person name="Levy D.E."/>
        </authorList>
    </citation>
    <scope>INHIBITION OF PHOSPHORYLATION BY VACCINIA VIRUS PROTEIN E3 (MICROBIAL INFECTION)</scope>
</reference>
<reference key="13">
    <citation type="journal article" date="2001" name="Oncogene">
        <title>HHV-8 encoded vIRF-1 represses the interferon antiviral response by blocking IRF-3 recruitment of the CBP/p300 coactivators.</title>
        <authorList>
            <person name="Lin R."/>
            <person name="Genin P."/>
            <person name="Mamane Y."/>
            <person name="Sgarbanti M."/>
            <person name="Battistini A."/>
            <person name="Harrington W.J. Jr."/>
            <person name="Barber G.N."/>
            <person name="Hiscott J."/>
        </authorList>
    </citation>
    <scope>INTERACTION WITH HHV-8 PROTEIN VIRF1 (MICROBIAL INFECTION)</scope>
</reference>
<reference key="14">
    <citation type="journal article" date="2002" name="J. Interferon Cytokine Res.">
        <title>Control of IRF-3 activation by phosphorylation.</title>
        <authorList>
            <person name="Yoneyama M."/>
            <person name="Suhara W."/>
            <person name="Fujita T."/>
        </authorList>
    </citation>
    <scope>REVIEW</scope>
</reference>
<reference key="15">
    <citation type="journal article" date="2002" name="J. Immunol.">
        <title>A novel Toll/IL-1 receptor domain-containing adapter that preferentially activates the IFN-beta promoter in the Toll-like receptor signaling.</title>
        <authorList>
            <person name="Yamamoto M."/>
            <person name="Sato S."/>
            <person name="Mori K."/>
            <person name="Hoshino K."/>
            <person name="Takeuchi O."/>
            <person name="Takeda K."/>
            <person name="Akira S."/>
        </authorList>
    </citation>
    <scope>INTERACTION WITH TICAM1</scope>
</reference>
<reference key="16">
    <citation type="journal article" date="2002" name="J. Virol.">
        <title>Interferon regulatory factor 3 is a cellular partner of rotavirus NSP1.</title>
        <authorList>
            <person name="Graff J.W."/>
            <person name="Mitzel D.N."/>
            <person name="Weisend C.M."/>
            <person name="Flenniken M.L."/>
            <person name="Hardy M.E."/>
        </authorList>
    </citation>
    <scope>INTERACTION WITH ROTAVIRUS A NSP1 (MICROBIAL INFECTION)</scope>
</reference>
<reference key="17">
    <citation type="journal article" date="2003" name="J. Exp. Med.">
        <title>LPS-TLR4 signaling to IRF-3/7 and NF-kappaB involves the toll adapters TRAM and TRIF.</title>
        <authorList>
            <person name="Fitzgerald K.A."/>
            <person name="Rowe D.C."/>
            <person name="Barnes B.J."/>
            <person name="Caffrey D.R."/>
            <person name="Visintin A."/>
            <person name="Latz E."/>
            <person name="Monks B."/>
            <person name="Pitha P.M."/>
            <person name="Golenbock D.T."/>
        </authorList>
    </citation>
    <scope>INTERACTION WITH TICAM2</scope>
</reference>
<reference key="18">
    <citation type="journal article" date="2003" name="J. Exp. Med.">
        <authorList>
            <person name="Fitzgerald K.A."/>
            <person name="Rowe D.C."/>
            <person name="Barnes B.J."/>
            <person name="Caffrey D.R."/>
            <person name="Visintin A."/>
            <person name="Latz E."/>
            <person name="Monks B."/>
            <person name="Pitha P.M."/>
            <person name="Golenbock D.T."/>
        </authorList>
    </citation>
    <scope>ERRATUM OF PUBMED:14517278</scope>
</reference>
<reference key="19">
    <citation type="journal article" date="2003" name="Science">
        <title>Triggering the interferon antiviral response through an IKK-related pathway.</title>
        <authorList>
            <person name="Sharma S."/>
            <person name="tenOever B.R."/>
            <person name="Grandvaux N."/>
            <person name="Zhou G.-P."/>
            <person name="Lin R."/>
            <person name="Hiscott J."/>
        </authorList>
    </citation>
    <scope>PHOSPHORYLATION</scope>
</reference>
<reference key="20">
    <citation type="journal article" date="2004" name="J. Biol. Chem.">
        <title>Mechanisms of the TRIF-induced interferon-stimulated response element and NF-kappaB activation and apoptosis pathways.</title>
        <authorList>
            <person name="Han K.J."/>
            <person name="Su X."/>
            <person name="Xu L.-G."/>
            <person name="Bin L.H."/>
            <person name="Zhang J."/>
            <person name="Shu H.-B."/>
        </authorList>
    </citation>
    <scope>INTERACTION WITH TICAM1</scope>
</reference>
<reference key="21">
    <citation type="journal article" date="2005" name="EMBO J.">
        <title>SIKE is an IKK epsilon/TBK1-associated suppressor of TLR3- and virus-triggered IRF-3 activation pathways.</title>
        <authorList>
            <person name="Huang J."/>
            <person name="Liu T."/>
            <person name="Xu L.-G."/>
            <person name="Chen D."/>
            <person name="Zhai Z."/>
            <person name="Shu H.-B."/>
        </authorList>
    </citation>
    <scope>INTERACTION WITH IKBKE AND TBK1</scope>
</reference>
<reference key="22">
    <citation type="journal article" date="2005" name="Mol. Cell">
        <title>VISA is an adapter protein required for virus-triggered IFN-beta Signaling.</title>
        <authorList>
            <person name="Xu L.-G."/>
            <person name="Wang Y.-Y."/>
            <person name="Han K.-J."/>
            <person name="Li L.-Y."/>
            <person name="Zhai Z."/>
            <person name="Shu H.-B."/>
        </authorList>
    </citation>
    <scope>INTERACTION WITH MAVS</scope>
</reference>
<reference key="23">
    <citation type="journal article" date="2006" name="Biochem. Pharmacol.">
        <title>Distinct functions of IRF-3 and IRF-7 in IFN-alpha gene regulation and control of anti-tumor activity in primary macrophages.</title>
        <authorList>
            <person name="Solis M."/>
            <person name="Goubau D."/>
            <person name="Romieu-Mourez R."/>
            <person name="Genin P."/>
            <person name="Civas A."/>
            <person name="Hiscott J."/>
        </authorList>
    </citation>
    <scope>REVIEW ON FUNCTION</scope>
</reference>
<reference key="24">
    <citation type="journal article" date="2006" name="Immunity">
        <title>Type I interferon gene induction by the interferon regulatory factor family of transcription factors.</title>
        <authorList>
            <person name="Honda K."/>
            <person name="Takaoka A."/>
            <person name="Taniguchi T."/>
        </authorList>
    </citation>
    <scope>REVIEW ON FUNCTION</scope>
</reference>
<reference key="25">
    <citation type="journal article" date="2006" name="Immunity">
        <authorList>
            <person name="Honda K."/>
            <person name="Takaoka A."/>
            <person name="Taniguchi T."/>
        </authorList>
    </citation>
    <scope>ERRATUM OF PUBMED:16979567</scope>
</reference>
<reference key="26">
    <citation type="journal article" date="2008" name="Cell Res.">
        <title>Negative feedback regulation of cellular antiviral signaling by RBCK1-mediated degradation of IRF3.</title>
        <authorList>
            <person name="Zhang M."/>
            <person name="Tian Y."/>
            <person name="Wang R.P."/>
            <person name="Gao D."/>
            <person name="Zhang Y."/>
            <person name="Diao F.C."/>
            <person name="Chen D.Y."/>
            <person name="Zhai Z.H."/>
            <person name="Shu H.B."/>
        </authorList>
    </citation>
    <scope>UBIQUITINATION</scope>
    <scope>INTERACTION WITH RBCK1</scope>
</reference>
<reference key="27">
    <citation type="journal article" date="2008" name="J. Immunol.">
        <title>The E3 ubiquitin ligase Ro52 negatively regulates IFN-beta production post-pathogen recognition by polyubiquitin-mediated degradation of IRF3.</title>
        <authorList>
            <person name="Higgs R."/>
            <person name="Ni Gabhann J."/>
            <person name="Ben Larbi N."/>
            <person name="Breen E.P."/>
            <person name="Fitzgerald K.A."/>
            <person name="Jefferies C.A."/>
        </authorList>
    </citation>
    <scope>INTERACTION WITH TRIM21</scope>
    <scope>POLYUBIQUITINATION</scope>
</reference>
<reference key="28">
    <citation type="journal article" date="2009" name="J. Virol.">
        <title>Ebola virus protein VP35 impairs the function of interferon regulatory factor-activating kinases IKKepsilon and TBK-1.</title>
        <authorList>
            <person name="Prins K.C."/>
            <person name="Cardenas W.B."/>
            <person name="Basler C.F."/>
        </authorList>
    </citation>
    <scope>PHOSPHORYLATION BY IKBKE AND TBK1</scope>
</reference>
<reference key="29">
    <citation type="journal article" date="2009" name="Mol. Cell. Biochem.">
        <title>RIOK3 interacts with caspase-10 and negatively regulates the NF-kappaB signaling pathway.</title>
        <authorList>
            <person name="Shan J."/>
            <person name="Wang P."/>
            <person name="Zhou J."/>
            <person name="Wu D."/>
            <person name="Shi H."/>
            <person name="Huo K."/>
        </authorList>
    </citation>
    <scope>INTERACTION WITH RIOK3</scope>
</reference>
<reference key="30">
    <citation type="journal article" date="2010" name="Immunity">
        <title>The ubiquitin E3 ligase RAUL negatively regulates type i interferon through ubiquitination of the transcription factors IRF7 and IRF3.</title>
        <authorList>
            <person name="Yu Y."/>
            <person name="Hayward G.S."/>
        </authorList>
    </citation>
    <scope>UBIQUITINATION</scope>
</reference>
<reference key="31">
    <citation type="journal article" date="2010" name="Cancer Immunol. Immunother.">
        <title>Regulation of immunity and oncogenesis by the IRF transcription factor family.</title>
        <authorList>
            <person name="Savitsky D."/>
            <person name="Tamura T."/>
            <person name="Yanai H."/>
            <person name="Taniguchi T."/>
        </authorList>
    </citation>
    <scope>REVIEW ON FUNCTION</scope>
</reference>
<reference key="32">
    <citation type="journal article" date="2010" name="Cell Res.">
        <title>Tom70 mediates activation of interferon regulatory factor 3 on mitochondria.</title>
        <authorList>
            <person name="Liu X.Y."/>
            <person name="Wei B."/>
            <person name="Shi H.X."/>
            <person name="Shan Y.F."/>
            <person name="Wang C."/>
        </authorList>
    </citation>
    <scope>INTERACTION WITH HSP90AA1</scope>
</reference>
<reference key="33">
    <citation type="journal article" date="2010" name="Mol. Cell. Biol.">
        <title>Positive regulation of interferon regulatory factor 3 activation by Herc5 via ISG15 modification.</title>
        <authorList>
            <person name="Shi H.X."/>
            <person name="Yang K."/>
            <person name="Liu X."/>
            <person name="Liu X.Y."/>
            <person name="Wei B."/>
            <person name="Shan Y.F."/>
            <person name="Zhu L.H."/>
            <person name="Wang C."/>
        </authorList>
    </citation>
    <scope>ISGYLATION AT LYS-193; LYS-360 AND LYS-366</scope>
    <scope>MUTAGENESIS OF LYS-193; LYS-360 AND LYS-366</scope>
    <scope>INTERACTION WITH HERC5</scope>
</reference>
<reference key="34">
    <citation type="journal article" date="2012" name="Sci. Signal.">
        <title>STING specifies IRF3 phosphorylation by TBK1 in the cytosolic DNA signaling pathway.</title>
        <authorList>
            <person name="Tanaka Y."/>
            <person name="Chen Z.J."/>
        </authorList>
    </citation>
    <scope>FUNCTION</scope>
    <scope>SUBUNIT</scope>
    <scope>INTERACTION WITH STING1</scope>
    <scope>PHOSPHORYLATION AT SER-385; SER-386 AND SER-396</scope>
    <scope>MUTAGENESIS OF SER-385 AND SER-386</scope>
</reference>
<reference key="35">
    <citation type="journal article" date="2013" name="J. Proteome Res.">
        <title>Toward a comprehensive characterization of a human cancer cell phosphoproteome.</title>
        <authorList>
            <person name="Zhou H."/>
            <person name="Di Palma S."/>
            <person name="Preisinger C."/>
            <person name="Peng M."/>
            <person name="Polat A.N."/>
            <person name="Heck A.J."/>
            <person name="Mohammed S."/>
        </authorList>
    </citation>
    <scope>IDENTIFICATION BY MASS SPECTROMETRY [LARGE SCALE ANALYSIS]</scope>
    <source>
        <tissue>Erythroleukemia</tissue>
    </source>
</reference>
<reference key="36">
    <citation type="journal article" date="2013" name="J. Virol.">
        <title>Herpes simplex virus 1 serine/threonine kinase US3 hyperphosphorylates IRF3 and inhibits beta interferon production.</title>
        <authorList>
            <person name="Wang S."/>
            <person name="Wang K."/>
            <person name="Lin R."/>
            <person name="Zheng C."/>
        </authorList>
    </citation>
    <scope>FUNCTION</scope>
    <scope>PHOSPHORYLATION AT SER-175 (MICROBIAL INFECTION)</scope>
</reference>
<reference key="37">
    <citation type="journal article" date="2013" name="Mol. Cell. Biol.">
        <title>Human DEAD box helicase 3 couples IkappaB kinase epsilon to interferon regulatory factor 3 activation.</title>
        <authorList>
            <person name="Gu L."/>
            <person name="Fullam A."/>
            <person name="Brennan R."/>
            <person name="Schroder M."/>
        </authorList>
    </citation>
    <scope>INTERACTION WITH DDX3X AND IKBKE</scope>
    <scope>PHOSPHORYLATION AT SER-396</scope>
</reference>
<reference key="38">
    <citation type="journal article" date="2013" name="Structure">
        <title>Structural insights into the functions of TBK1 in innate antimicrobial immunity.</title>
        <authorList>
            <person name="Shu C."/>
            <person name="Sankaran B."/>
            <person name="Chaton C.T."/>
            <person name="Herr A.B."/>
            <person name="Mishra A."/>
            <person name="Peng J."/>
            <person name="Li P."/>
        </authorList>
    </citation>
    <scope>PHOSPHORYLATION AT THR-3; SER-14; THR-75; SER-97; THR-180; SER-188; THR-237; THR-244; THR-253; SER-398; THR-404 AND SER-427</scope>
    <scope>PHOSPHORYLATION AT SER-386 BY TBK1</scope>
    <scope>MUTAGENESIS OF SER-386</scope>
</reference>
<reference key="39">
    <citation type="journal article" date="2014" name="J. Proteomics">
        <title>An enzyme assisted RP-RPLC approach for in-depth analysis of human liver phosphoproteome.</title>
        <authorList>
            <person name="Bian Y."/>
            <person name="Song C."/>
            <person name="Cheng K."/>
            <person name="Dong M."/>
            <person name="Wang F."/>
            <person name="Huang J."/>
            <person name="Sun D."/>
            <person name="Wang L."/>
            <person name="Ye M."/>
            <person name="Zou H."/>
        </authorList>
    </citation>
    <scope>IDENTIFICATION BY MASS SPECTROMETRY [LARGE SCALE ANALYSIS]</scope>
    <source>
        <tissue>Liver</tissue>
    </source>
</reference>
<reference key="40">
    <citation type="journal article" date="2015" name="J. Cell Biol.">
        <title>TRIM-mediated precision autophagy targets cytoplasmic regulators of innate immunity.</title>
        <authorList>
            <person name="Kimura T."/>
            <person name="Jain A."/>
            <person name="Choi S.W."/>
            <person name="Mandell M.A."/>
            <person name="Schroder K."/>
            <person name="Johansen T."/>
            <person name="Deretic V."/>
        </authorList>
    </citation>
    <scope>HOMODIMERIZATION</scope>
    <scope>INTERACTION WITH TRIM21 AND ULK1</scope>
</reference>
<reference key="41">
    <citation type="journal article" date="2015" name="J. Virol.">
        <title>Tom70 mediates Sendai virus-induced apoptosis on mitochondria.</title>
        <authorList>
            <person name="Wei B."/>
            <person name="Cui Y."/>
            <person name="Huang Y."/>
            <person name="Liu H."/>
            <person name="Li L."/>
            <person name="Li M."/>
            <person name="Ruan K.C."/>
            <person name="Zhou Q."/>
            <person name="Wang C."/>
        </authorList>
    </citation>
    <scope>FUNCTION</scope>
    <scope>INTERACTION WITH BCL2; BAX AND HSP90AA1</scope>
    <scope>SUBCELLULAR LOCATION</scope>
</reference>
<reference key="42">
    <citation type="journal article" date="2017" name="Biochem. J.">
        <title>DDX3 directly regulates TRAF3 ubiquitination and acts as a scaffold to co-ordinate assembly of signalling complexes downstream from MAVS.</title>
        <authorList>
            <person name="Gu L."/>
            <person name="Fullam A."/>
            <person name="McCormack N."/>
            <person name="Hoehn Y."/>
            <person name="Schroeder M."/>
        </authorList>
    </citation>
    <scope>INTERACTION WITH DDX3X AND TRAF3</scope>
</reference>
<reference key="43">
    <citation type="journal article" date="2017" name="Leukemia">
        <title>ZDHHC11 and ZDHHC11B are critical novel components of the oncogenic MYC-miR-150-MYB network in Burkitt lymphoma.</title>
        <authorList>
            <person name="Dzikiewicz-Krawczyk A."/>
            <person name="Kok K."/>
            <person name="Slezak-Prochazka I."/>
            <person name="Robertus J.L."/>
            <person name="Bruining J."/>
            <person name="Tayari M.M."/>
            <person name="Rutgers B."/>
            <person name="de Jong D."/>
            <person name="Koerts J."/>
            <person name="Seitz A."/>
            <person name="Li J."/>
            <person name="Tillema B."/>
            <person name="Guikema J.E."/>
            <person name="Nolte I.M."/>
            <person name="Diepstra A."/>
            <person name="Visser L."/>
            <person name="Kluiver J."/>
            <person name="van den Berg A."/>
        </authorList>
    </citation>
    <scope>INTERACTION WITH STING1 AND ZDHHC11</scope>
    <scope>REGION</scope>
</reference>
<reference key="44">
    <citation type="journal article" date="2018" name="J. Biol. Chem.">
        <title>C6orf106 is a novel inhibitor of the interferon-regulatory factor 3-dependent innate antiviral response.</title>
        <authorList>
            <person name="Ambrose R.L."/>
            <person name="Liu Y.C."/>
            <person name="Adams T.E."/>
            <person name="Bean A.G.D."/>
            <person name="Stewart C.R."/>
        </authorList>
    </citation>
    <scope>FUNCTION</scope>
    <scope>INDUCTION BY DSRNA</scope>
    <scope>INTERACTION WITH IRF3</scope>
</reference>
<reference key="45">
    <citation type="journal article" date="2018" name="Virology">
        <title>Seneca Valley Virus 3Cpro abrogates the IRF3- and IRF7-mediated innate immune response by degrading IRF3 and IRF7.</title>
        <authorList>
            <person name="Xue Q."/>
            <person name="Liu H."/>
            <person name="Zhu Z."/>
            <person name="Yang F."/>
            <person name="Ma L."/>
            <person name="Cai X."/>
            <person name="Xue Q."/>
            <person name="Zheng H."/>
        </authorList>
    </citation>
    <scope>INTERACTION WITH SENECA VALLEY VIRUS PROTEASE 3C (MICROBIAL INFECTION)</scope>
</reference>
<reference key="46">
    <citation type="journal article" date="2015" name="J. Exp. Med.">
        <title>Functional IRF3 deficiency in a patient with herpes simplex encephalitis.</title>
        <authorList>
            <person name="Andersen L.L."/>
            <person name="Moerk N."/>
            <person name="Reinert L.S."/>
            <person name="Kofod-Olsen E."/>
            <person name="Narita R."/>
            <person name="Joergensen S.E."/>
            <person name="Skipper K.A."/>
            <person name="Hoening K."/>
            <person name="Gad H.H."/>
            <person name="Oestergaard L."/>
            <person name="Oerntoft T.F."/>
            <person name="Hornung V."/>
            <person name="Paludan S.R."/>
            <person name="Mikkelsen J.G."/>
            <person name="Fujita T."/>
            <person name="Christiansen M."/>
            <person name="Hartmann R."/>
            <person name="Mogensen T.H."/>
        </authorList>
    </citation>
    <scope>INVOLVEMENT IN IIAE7</scope>
    <scope>VARIANT IIAE7 GLN-285</scope>
    <scope>CHARACTERIZATION OF VARIANT IIAE7 GLN-285</scope>
</reference>
<reference key="47">
    <citation type="journal article" date="2015" name="Science">
        <title>Phosphorylation of innate immune adaptor proteins MAVS, STING, and TRIF induces IRF3 activation.</title>
        <authorList>
            <person name="Liu S."/>
            <person name="Cai X."/>
            <person name="Wu J."/>
            <person name="Cong Q."/>
            <person name="Chen X."/>
            <person name="Li T."/>
            <person name="Du F."/>
            <person name="Ren J."/>
            <person name="Wu Y.T."/>
            <person name="Grishin N.V."/>
            <person name="Chen Z.J."/>
        </authorList>
    </citation>
    <scope>FUNCTION</scope>
    <scope>ACTIVITY REGULATION</scope>
    <scope>INTERACTION WITH STING1; MAVS AND TICAM1</scope>
    <scope>PHOSPHORYLATION AT SER-385; SER-386 AND SER-396</scope>
    <scope>MUTAGENESIS OF SER-385 AND SER-386</scope>
</reference>
<reference key="48">
    <citation type="journal article" date="2019" name="J. Virol.">
        <title>LYAR suppresses interferon-beta induction by targeting phosphorylated IRF3.</title>
        <authorList>
            <person name="Yang C."/>
            <person name="Liu X."/>
            <person name="Cheng T."/>
            <person name="Xiao R."/>
            <person name="Gao Q."/>
            <person name="Ming F."/>
            <person name="Jin M."/>
            <person name="Chen H."/>
            <person name="Zhou H."/>
        </authorList>
    </citation>
    <scope>FUNCTION</scope>
    <scope>SUBCELLULAR LOCATION</scope>
    <scope>INTERACTION WITH LYAR</scope>
</reference>
<reference key="49">
    <citation type="journal article" date="2019" name="Front. Immunol.">
        <title>Herpes Simplex Virus Type 2 Immediate Early Protein ICP27 Inhibits IFN-beta Production in Mucosal Epithelial Cells by Antagonizing IRF3 Activation.</title>
        <authorList>
            <person name="Guan X."/>
            <person name="Zhang M."/>
            <person name="Fu M."/>
            <person name="Luo S."/>
            <person name="Hu Q."/>
        </authorList>
    </citation>
    <scope>INTERACTION WITH HERPES SIMPLEX VIRUS 2 (HHV-2) PROTEIN ICP27 (MICROBIAL INFECTION)</scope>
</reference>
<reference key="50">
    <citation type="journal article" date="2019" name="J. Virol.">
        <title>Human Cytomegalovirus DNA Polymerase Subunit UL44 Antagonizes Antiviral Immune Responses by Suppressing IRF3- and NF-kappaB-Mediated Transcription.</title>
        <authorList>
            <person name="Fu Y.Z."/>
            <person name="Su S."/>
            <person name="Zou H.M."/>
            <person name="Guo Y."/>
            <person name="Wang S.Y."/>
            <person name="Li S."/>
            <person name="Luo M.H."/>
            <person name="Wang Y.Y."/>
        </authorList>
    </citation>
    <scope>INTERACTION WITH HUMAN CYTOMEGALOVIRUS PROTEIN UL44 (MICROBIAL INFECTION)</scope>
</reference>
<reference key="51">
    <citation type="journal article" date="2019" name="Mol. Cell">
        <title>Apoptotic caspases suppress type i interferon production via the cleavage of cGAS, MAVS, and IRF3.</title>
        <authorList>
            <person name="Ning X."/>
            <person name="Wang Y."/>
            <person name="Jing M."/>
            <person name="Sha M."/>
            <person name="Lv M."/>
            <person name="Gao P."/>
            <person name="Zhang R."/>
            <person name="Huang X."/>
            <person name="Feng J.M."/>
            <person name="Jiang Z."/>
        </authorList>
    </citation>
    <scope>PROTEOLYTIC CLEAVAGE</scope>
    <scope>MUTAGENESIS OF ASP-116 AND 121-ASP--ASP-125</scope>
</reference>
<reference key="52">
    <citation type="journal article" date="2019" name="J. Cell Sci.">
        <title>DDX56 inhibits type I interferon by disrupting assembly of IRF3-IPO5 to inhibit IRF3 nucleus import.</title>
        <authorList>
            <person name="Li D."/>
            <person name="Fu S."/>
            <person name="Wu Z."/>
            <person name="Yang W."/>
            <person name="Ru Y."/>
            <person name="Shu H."/>
            <person name="Liu X."/>
            <person name="Zheng H."/>
        </authorList>
    </citation>
    <scope>FUNCTION</scope>
    <scope>INTERACTION WITH DDX56</scope>
    <scope>SUBCELLULAR LOCATION</scope>
</reference>
<reference key="53">
    <citation type="journal article" date="2020" name="Nature">
        <title>Papain-like protease regulates SARS-CoV-2 viral spread and innate immunity.</title>
        <authorList>
            <person name="Shin D."/>
            <person name="Mukherjee R."/>
            <person name="Grewe D."/>
            <person name="Bojkova D."/>
            <person name="Baek K."/>
            <person name="Bhattacharya A."/>
            <person name="Schulz L."/>
            <person name="Widera M."/>
            <person name="Mehdipour A.R."/>
            <person name="Tascher G."/>
            <person name="Geurink P.P."/>
            <person name="Wilhelm A."/>
            <person name="van der Heden van Noort G.J."/>
            <person name="Ovaa H."/>
            <person name="Mueller S."/>
            <person name="Knobeloch K.P."/>
            <person name="Rajalingam K."/>
            <person name="Schulman B.A."/>
            <person name="Cinatl J."/>
            <person name="Hummer G."/>
            <person name="Ciesek S."/>
            <person name="Dikic I."/>
        </authorList>
    </citation>
    <scope>ISGYLATION (MICROBIAL INFECTION)</scope>
</reference>
<reference key="54">
    <citation type="journal article" date="2021" name="Cell Rep.">
        <title>MDA5 Governs the Innate Immune Response to SARS-CoV-2 in Lung Epithelial Cells.</title>
        <authorList>
            <person name="Yin X."/>
            <person name="Riva L."/>
            <person name="Pu Y."/>
            <person name="Martin-Sancho L."/>
            <person name="Kanamune J."/>
            <person name="Yamamoto Y."/>
            <person name="Sakai K."/>
            <person name="Gotoh S."/>
            <person name="Miorin L."/>
            <person name="De Jesus P.D."/>
            <person name="Yang C.C."/>
            <person name="Herbert K.M."/>
            <person name="Yoh S."/>
            <person name="Hultquist J.F."/>
            <person name="Garcia-Sastre A."/>
            <person name="Chanda S.K."/>
        </authorList>
    </citation>
    <scope>FUNCTION</scope>
    <scope>ACTIVITY REGULATION (MICROBIAL INFECTION)</scope>
</reference>
<reference key="55">
    <citation type="journal article" date="2022" name="Biochem. Biophys. Res. Commun.">
        <title>NBR1 mediates autophagic degradation of IRF3 to negatively regulate type I interferon production.</title>
        <authorList>
            <person name="Cai Y."/>
            <person name="Zhu Y."/>
            <person name="Zheng J."/>
            <person name="Zhang Y."/>
            <person name="Chen W."/>
        </authorList>
    </citation>
    <scope>INTERACTION WITH NBR1</scope>
</reference>
<reference key="56">
    <citation type="journal article" date="2022" name="Nature">
        <title>Coronaviruses exploit a host cysteine-aspartic protease for replication.</title>
        <authorList>
            <person name="Chu H."/>
            <person name="Hou Y."/>
            <person name="Yang D."/>
            <person name="Wen L."/>
            <person name="Shuai H."/>
            <person name="Yoon C."/>
            <person name="Shi J."/>
            <person name="Chai Y."/>
            <person name="Yuen T.T."/>
            <person name="Hu B."/>
            <person name="Li C."/>
            <person name="Zhao X."/>
            <person name="Wang Y."/>
            <person name="Huang X."/>
            <person name="Lee K.S."/>
            <person name="Luo C."/>
            <person name="Cai J.P."/>
            <person name="Poon V.K."/>
            <person name="Chan C.C."/>
            <person name="Zhang A.J."/>
            <person name="Yuan S."/>
            <person name="Sit K.Y."/>
            <person name="Foo D.C."/>
            <person name="Au W.K."/>
            <person name="Wong K.K."/>
            <person name="Zhou J."/>
            <person name="Kok K.H."/>
            <person name="Jin D.Y."/>
            <person name="Chan J.F."/>
            <person name="Yuen K.Y."/>
        </authorList>
    </citation>
    <scope>INTERACTION WITH MERS-COV PROTEIN N (MICROBIAL INFECTION)</scope>
    <scope>SUBCELLULAR LOCATION</scope>
</reference>
<reference key="57">
    <citation type="journal article" date="2025" name="PLoS Pathog.">
        <title>USP5 inhibits anti-RNA viral innate immunity by deconjugating K48-linked unanchored and K63-linked anchored ubiquitin on IRF3.</title>
        <authorList>
            <person name="Qiao Z."/>
            <person name="Li D."/>
            <person name="Zhang F."/>
            <person name="Zhu J."/>
            <person name="Liu S."/>
            <person name="Bai X."/>
            <person name="Yao H."/>
            <person name="Chen Z."/>
            <person name="Yan Y."/>
            <person name="Xu X."/>
            <person name="Ma F."/>
        </authorList>
    </citation>
    <scope>DEUBIQUITINATION BY USP5</scope>
    <scope>SUBCELLULAR LOCATION</scope>
</reference>
<reference key="58">
    <citation type="journal article" date="2023" name="Mol. Cell">
        <title>Metabolic enzyme UAP1 mediates IRF3 pyrophosphorylation to facilitate innate immune response.</title>
        <authorList>
            <person name="Yang S."/>
            <person name="Jin S."/>
            <person name="Xian H."/>
            <person name="Zhao Z."/>
            <person name="Wang L."/>
            <person name="Wu Y."/>
            <person name="Zhou L."/>
            <person name="Li M."/>
            <person name="Cui J."/>
        </authorList>
    </citation>
    <scope>FUNCTION</scope>
    <scope>ACTIVITY REGULATION</scope>
    <scope>SUBUNIT</scope>
    <scope>SUBCELLULAR LOCATION</scope>
    <scope>PYROPHOSPHORYLATION AT SER-386</scope>
    <scope>PHOSPHORYLATION AT SER-386 AND SER-396</scope>
    <scope>MUTAGENESIS OF SER-386 AND THR-390</scope>
</reference>
<reference key="59">
    <citation type="journal article" date="2003" name="Nat. Struct. Biol.">
        <title>X-ray crystal structure of IRF-3 and its functional implications.</title>
        <authorList>
            <person name="Takahasi K."/>
            <person name="Suzuki N.N."/>
            <person name="Horiuchi M."/>
            <person name="Mori M."/>
            <person name="Suhara W."/>
            <person name="Okabe Y."/>
            <person name="Fukuhara Y."/>
            <person name="Terasawa H."/>
            <person name="Akira S."/>
            <person name="Fujita T."/>
            <person name="Inagaki F."/>
        </authorList>
    </citation>
    <scope>X-RAY CRYSTALLOGRAPHY (2.3 ANGSTROMS) OF 175-427</scope>
    <scope>DISULFIDE BOND</scope>
</reference>
<reference key="60">
    <citation type="journal article" date="2003" name="Nat. Struct. Biol.">
        <title>Crystal structure of IRF-3 reveals mechanism of autoinhibition and virus-induced phosphoactivation.</title>
        <authorList>
            <person name="Qin B.Y."/>
            <person name="Liu C."/>
            <person name="Lam S.S."/>
            <person name="Srinath H."/>
            <person name="Delston R."/>
            <person name="Correia J.J."/>
            <person name="Derynck R."/>
            <person name="Lin K."/>
        </authorList>
    </citation>
    <scope>X-RAY CRYSTALLOGRAPHY (2.1 ANGSTROMS) OF 173-427</scope>
    <scope>DISULFIDE BOND</scope>
</reference>
<reference key="61">
    <citation type="journal article" date="2004" name="EMBO J.">
        <title>Crystal structure of ATF-2/c-Jun and IRF-3 bound to the interferon-beta enhancer.</title>
        <authorList>
            <person name="Panne D."/>
            <person name="Maniatis T."/>
            <person name="Harrison S.C."/>
        </authorList>
    </citation>
    <scope>X-RAY CRYSTALLOGRAPHY (3.0 ANGSTROMS) OF 1-112</scope>
</reference>
<reference key="62">
    <citation type="journal article" date="2005" name="Structure">
        <title>Crystal structure of IRF-3 in complex with CBP.</title>
        <authorList>
            <person name="Qin B.Y."/>
            <person name="Liu C."/>
            <person name="Srinath H."/>
            <person name="Lam S.S."/>
            <person name="Correia J.J."/>
            <person name="Derynck R."/>
            <person name="Lin K."/>
        </authorList>
    </citation>
    <scope>X-RAY CRYSTALLOGRAPHY (2.4 ANGSTROMS) OF 173-394</scope>
    <scope>FUNCTION</scope>
    <scope>INTERACTION WITH CREBBP</scope>
</reference>
<reference evidence="63 64 65 66 67 68" key="63">
    <citation type="journal article" date="2016" name="Proc. Natl. Acad. Sci. U.S.A.">
        <title>Structural basis for concerted recruitment and activation of IRF-3 by innate immune adaptor proteins.</title>
        <authorList>
            <person name="Zhao B."/>
            <person name="Shu C."/>
            <person name="Gao X."/>
            <person name="Sankaran B."/>
            <person name="Du F."/>
            <person name="Shelton C.L."/>
            <person name="Herr A.B."/>
            <person name="Ji J.Y."/>
            <person name="Li P."/>
        </authorList>
    </citation>
    <scope>X-RAY CRYSTALLOGRAPHY (1.60 ANGSTROMS) OF 189-427 IN COMPLEX WITH CREBBP; MAVS; STING1 OR TICAM1</scope>
    <scope>X-RAY CRYSTALLOGRAPHY (2.91 ANGSTROMS) OF 189-427 IN COMPLEX WITH ROTAVIRUS A NSP1 (MICROBIAL INFECTION)</scope>
    <scope>FUNCTION</scope>
    <scope>ACTIVITY REGULATION</scope>
    <scope>INTERACTION WITH CREBBP; MAVS; STING1 AND TICAM1</scope>
    <scope>INTERACTION WITH ROTAVIRUS A NSP1 (MICROBIAL INFECTION)</scope>
    <scope>PHOSPHORYLATION AT SER-386 AND SER-396</scope>
    <scope>MUTAGENESIS OF ARG-285; HIS-288; HIS-290; LYS-313; SER-386 AND SER-396</scope>
</reference>
<reference key="64">
    <citation type="journal article" date="2020" name="Science">
        <title>Inborn errors of type I IFN immunity in patients with life-threatening COVID-19.</title>
        <authorList>
            <consortium name="COVID-STORM Clinicians"/>
            <consortium name="COVID Clinicians"/>
            <consortium name="Imagine COVID Group"/>
            <consortium name="French COVID Cohort Study Group"/>
            <consortium name="CoV-Contact Cohort"/>
            <consortium name="Amsterdam UMC Covid-19 Biobank"/>
            <consortium name="COVID Human Genetic Effort"/>
            <consortium name="NIAID-USUHS/TAGC COVID Immunity Group"/>
            <person name="Zhang Q."/>
            <person name="Bastard P."/>
            <person name="Liu Z."/>
            <person name="Le Pen J."/>
            <person name="Moncada-Velez M."/>
            <person name="Chen J."/>
            <person name="Ogishi M."/>
            <person name="Sabli I.K.D."/>
            <person name="Hodeib S."/>
            <person name="Korol C."/>
            <person name="Rosain J."/>
            <person name="Bilguvar K."/>
            <person name="Ye J."/>
            <person name="Bolze A."/>
            <person name="Bigio B."/>
            <person name="Yang R."/>
            <person name="Arias A.A."/>
            <person name="Zhou Q."/>
            <person name="Zhang Y."/>
            <person name="Onodi F."/>
            <person name="Korniotis S."/>
            <person name="Karpf L."/>
            <person name="Philippot Q."/>
            <person name="Chbihi M."/>
            <person name="Bonnet-Madin L."/>
            <person name="Dorgham K."/>
            <person name="Smith N."/>
            <person name="Schneider W.M."/>
            <person name="Razooky B.S."/>
            <person name="Hoffmann H.H."/>
            <person name="Michailidis E."/>
            <person name="Moens L."/>
            <person name="Han J.E."/>
            <person name="Lorenzo L."/>
            <person name="Bizien L."/>
            <person name="Meade P."/>
            <person name="Neehus A.L."/>
            <person name="Ugurbil A.C."/>
            <person name="Corneau A."/>
            <person name="Kerner G."/>
            <person name="Zhang P."/>
            <person name="Rapaport F."/>
            <person name="Seeleuthner Y."/>
            <person name="Manry J."/>
            <person name="Masson C."/>
            <person name="Schmitt Y."/>
            <person name="Schlueter A."/>
            <person name="Le Voyer T."/>
            <person name="Khan T."/>
            <person name="Li J."/>
            <person name="Fellay J."/>
            <person name="Roussel L."/>
            <person name="Shahrooei M."/>
            <person name="Alosaimi M.F."/>
            <person name="Mansouri D."/>
            <person name="Al-Saud H."/>
            <person name="Al-Mulla F."/>
            <person name="Almourfi F."/>
            <person name="Al-Muhsen S.Z."/>
            <person name="Alsohime F."/>
            <person name="Al Turki S."/>
            <person name="Hasanato R."/>
            <person name="van de Beek D."/>
            <person name="Biondi A."/>
            <person name="Bettini L.R."/>
            <person name="D'Angio' M."/>
            <person name="Bonfanti P."/>
            <person name="Imberti L."/>
            <person name="Sottini A."/>
            <person name="Paghera S."/>
            <person name="Quiros-Roldan E."/>
            <person name="Rossi C."/>
            <person name="Oler A.J."/>
            <person name="Tompkins M.F."/>
            <person name="Alba C."/>
            <person name="Vandernoot I."/>
            <person name="Goffard J.C."/>
            <person name="Smits G."/>
            <person name="Migeotte I."/>
            <person name="Haerynck F."/>
            <person name="Soler-Palacin P."/>
            <person name="Martin-Nalda A."/>
            <person name="Colobran R."/>
            <person name="Morange P.E."/>
            <person name="Keles S."/>
            <person name="Coelkesen F."/>
            <person name="Ozcelik T."/>
            <person name="Yasar K.K."/>
            <person name="Senoglu S."/>
            <person name="Karabela S.N."/>
            <person name="Rodriguez-Gallego C."/>
            <person name="Novelli G."/>
            <person name="Hraiech S."/>
            <person name="Tandjaoui-Lambiotte Y."/>
            <person name="Duval X."/>
            <person name="Laouenan C."/>
            <person name="Snow A.L."/>
            <person name="Dalgard C.L."/>
            <person name="Milner J.D."/>
            <person name="Vinh D.C."/>
            <person name="Mogensen T.H."/>
            <person name="Marr N."/>
            <person name="Spaan A.N."/>
            <person name="Boisson B."/>
            <person name="Boisson-Dupuis S."/>
            <person name="Bustamante J."/>
            <person name="Puel A."/>
            <person name="Ciancanelli M.J."/>
            <person name="Meyts I."/>
            <person name="Maniatis T."/>
            <person name="Soumelis V."/>
            <person name="Amara A."/>
            <person name="Nussenzweig M."/>
            <person name="Garcia-Sastre A."/>
            <person name="Krammer F."/>
            <person name="Pujol A."/>
            <person name="Duffy D."/>
            <person name="Lifton R.P."/>
            <person name="Zhang S.Y."/>
            <person name="Gorochov G."/>
            <person name="Beziat V."/>
            <person name="Jouanguy E."/>
            <person name="Sancho-Shimizu V."/>
            <person name="Rice C.M."/>
            <person name="Abel L."/>
            <person name="Notarangelo L.D."/>
            <person name="Cobat A."/>
            <person name="Su H.C."/>
            <person name="Casanova J.L."/>
        </authorList>
    </citation>
    <scope>VARIANTS GLU-49 DEL; 145-GLY--GLU-200 DEL; LYS-146; GLN-227; GLN-285 AND VAL-401</scope>
    <scope>CHARACTERIZATION OF VARIANTS GLU-49 DEL; 145-GLY--GLU-200 DEL; LYS-146; GLN-227; GLN-285 AND VAL-401</scope>
    <scope>FUNCTION</scope>
</reference>
<keyword id="KW-0002">3D-structure</keyword>
<keyword id="KW-0007">Acetylation</keyword>
<keyword id="KW-0010">Activator</keyword>
<keyword id="KW-0025">Alternative splicing</keyword>
<keyword id="KW-0051">Antiviral defense</keyword>
<keyword id="KW-0963">Cytoplasm</keyword>
<keyword id="KW-0225">Disease variant</keyword>
<keyword id="KW-1015">Disulfide bond</keyword>
<keyword id="KW-0238">DNA-binding</keyword>
<keyword id="KW-0945">Host-virus interaction</keyword>
<keyword id="KW-0391">Immunity</keyword>
<keyword id="KW-0399">Innate immunity</keyword>
<keyword id="KW-1017">Isopeptide bond</keyword>
<keyword id="KW-0496">Mitochondrion</keyword>
<keyword id="KW-0539">Nucleus</keyword>
<keyword id="KW-0597">Phosphoprotein</keyword>
<keyword id="KW-1267">Proteomics identification</keyword>
<keyword id="KW-1185">Reference proteome</keyword>
<keyword id="KW-0804">Transcription</keyword>
<keyword id="KW-0805">Transcription regulation</keyword>
<keyword id="KW-0832">Ubl conjugation</keyword>
<accession>Q14653</accession>
<accession>A8K7L2</accession>
<accession>B2RAZ3</accession>
<accession>Q5FBY1</accession>
<accession>Q5FBY2</accession>
<accession>Q5FBY4</accession>
<accession>Q7Z5G6</accession>
<sequence length="427" mass="47219">MGTPKPRILPWLVSQLDLGQLEGVAWVNKSRTRFRIPWKHGLRQDAQQEDFGIFQAWAEATGAYVPGRDKPDLPTWKRNFRSALNRKEGLRLAEDRSKDPHDPHKIYEFVNSGVGDFSQPDTSPDTNGGGSTSDTQEDILDELLGNMVLAPLPDPGPPSLAVAPEPCPQPLRSPSLDNPTPFPNLGPSENPLKRLLVPGEEWEFEVTAFYRGRQVFQQTISCPEGLRLVGSEVGDRTLPGWPVTLPDPGMSLTDRGVMSYVRHVLSCLGGGLALWRAGQWLWAQRLGHCHTYWAVSEELLPNSGHGPDGEVPKDKEGGVFDLGPFIVDLITFTEGSGRSPRYALWFCVGESWPQDQPWTKRLVMVKVVPTCLRALVEMARVGGASSLENTVDLHISNSHPLSLTSDQYKAYLQDLVEGMDFQGPGES</sequence>
<evidence type="ECO:0000250" key="1">
    <source>
        <dbReference type="UniProtKB" id="P70671"/>
    </source>
</evidence>
<evidence type="ECO:0000255" key="2">
    <source>
        <dbReference type="PROSITE-ProRule" id="PRU00840"/>
    </source>
</evidence>
<evidence type="ECO:0000256" key="3">
    <source>
        <dbReference type="SAM" id="MobiDB-lite"/>
    </source>
</evidence>
<evidence type="ECO:0000269" key="4">
    <source>
    </source>
</evidence>
<evidence type="ECO:0000269" key="5">
    <source>
    </source>
</evidence>
<evidence type="ECO:0000269" key="6">
    <source>
    </source>
</evidence>
<evidence type="ECO:0000269" key="7">
    <source>
    </source>
</evidence>
<evidence type="ECO:0000269" key="8">
    <source>
    </source>
</evidence>
<evidence type="ECO:0000269" key="9">
    <source>
    </source>
</evidence>
<evidence type="ECO:0000269" key="10">
    <source>
    </source>
</evidence>
<evidence type="ECO:0000269" key="11">
    <source>
    </source>
</evidence>
<evidence type="ECO:0000269" key="12">
    <source>
    </source>
</evidence>
<evidence type="ECO:0000269" key="13">
    <source>
    </source>
</evidence>
<evidence type="ECO:0000269" key="14">
    <source>
    </source>
</evidence>
<evidence type="ECO:0000269" key="15">
    <source>
    </source>
</evidence>
<evidence type="ECO:0000269" key="16">
    <source>
    </source>
</evidence>
<evidence type="ECO:0000269" key="17">
    <source>
    </source>
</evidence>
<evidence type="ECO:0000269" key="18">
    <source>
    </source>
</evidence>
<evidence type="ECO:0000269" key="19">
    <source>
    </source>
</evidence>
<evidence type="ECO:0000269" key="20">
    <source>
    </source>
</evidence>
<evidence type="ECO:0000269" key="21">
    <source>
    </source>
</evidence>
<evidence type="ECO:0000269" key="22">
    <source>
    </source>
</evidence>
<evidence type="ECO:0000269" key="23">
    <source>
    </source>
</evidence>
<evidence type="ECO:0000269" key="24">
    <source>
    </source>
</evidence>
<evidence type="ECO:0000269" key="25">
    <source>
    </source>
</evidence>
<evidence type="ECO:0000269" key="26">
    <source>
    </source>
</evidence>
<evidence type="ECO:0000269" key="27">
    <source>
    </source>
</evidence>
<evidence type="ECO:0000269" key="28">
    <source>
    </source>
</evidence>
<evidence type="ECO:0000269" key="29">
    <source>
    </source>
</evidence>
<evidence type="ECO:0000269" key="30">
    <source>
    </source>
</evidence>
<evidence type="ECO:0000269" key="31">
    <source>
    </source>
</evidence>
<evidence type="ECO:0000269" key="32">
    <source>
    </source>
</evidence>
<evidence type="ECO:0000269" key="33">
    <source>
    </source>
</evidence>
<evidence type="ECO:0000269" key="34">
    <source>
    </source>
</evidence>
<evidence type="ECO:0000269" key="35">
    <source>
    </source>
</evidence>
<evidence type="ECO:0000269" key="36">
    <source>
    </source>
</evidence>
<evidence type="ECO:0000269" key="37">
    <source>
    </source>
</evidence>
<evidence type="ECO:0000269" key="38">
    <source>
    </source>
</evidence>
<evidence type="ECO:0000269" key="39">
    <source>
    </source>
</evidence>
<evidence type="ECO:0000269" key="40">
    <source>
    </source>
</evidence>
<evidence type="ECO:0000269" key="41">
    <source>
    </source>
</evidence>
<evidence type="ECO:0000269" key="42">
    <source>
    </source>
</evidence>
<evidence type="ECO:0000269" key="43">
    <source>
    </source>
</evidence>
<evidence type="ECO:0000269" key="44">
    <source>
    </source>
</evidence>
<evidence type="ECO:0000269" key="45">
    <source>
    </source>
</evidence>
<evidence type="ECO:0000269" key="46">
    <source>
    </source>
</evidence>
<evidence type="ECO:0000269" key="47">
    <source>
    </source>
</evidence>
<evidence type="ECO:0000269" key="48">
    <source>
    </source>
</evidence>
<evidence type="ECO:0000269" key="49">
    <source>
    </source>
</evidence>
<evidence type="ECO:0000269" key="50">
    <source>
    </source>
</evidence>
<evidence type="ECO:0000269" key="51">
    <source ref="5"/>
</evidence>
<evidence type="ECO:0000303" key="52">
    <source>
    </source>
</evidence>
<evidence type="ECO:0000303" key="53">
    <source>
    </source>
</evidence>
<evidence type="ECO:0000303" key="54">
    <source>
    </source>
</evidence>
<evidence type="ECO:0000303" key="55">
    <source>
    </source>
</evidence>
<evidence type="ECO:0000303" key="56">
    <source>
    </source>
</evidence>
<evidence type="ECO:0000303" key="57">
    <source>
    </source>
</evidence>
<evidence type="ECO:0000303" key="58">
    <source>
    </source>
</evidence>
<evidence type="ECO:0000303" key="59">
    <source ref="2"/>
</evidence>
<evidence type="ECO:0000305" key="60"/>
<evidence type="ECO:0000305" key="61">
    <source>
    </source>
</evidence>
<evidence type="ECO:0000312" key="62">
    <source>
        <dbReference type="HGNC" id="HGNC:6118"/>
    </source>
</evidence>
<evidence type="ECO:0007744" key="63">
    <source>
        <dbReference type="PDB" id="5JEJ"/>
    </source>
</evidence>
<evidence type="ECO:0007744" key="64">
    <source>
        <dbReference type="PDB" id="5JEK"/>
    </source>
</evidence>
<evidence type="ECO:0007744" key="65">
    <source>
        <dbReference type="PDB" id="5JEL"/>
    </source>
</evidence>
<evidence type="ECO:0007744" key="66">
    <source>
        <dbReference type="PDB" id="5JEM"/>
    </source>
</evidence>
<evidence type="ECO:0007744" key="67">
    <source>
        <dbReference type="PDB" id="5JEO"/>
    </source>
</evidence>
<evidence type="ECO:0007744" key="68">
    <source>
        <dbReference type="PDB" id="5JER"/>
    </source>
</evidence>
<evidence type="ECO:0007829" key="69">
    <source>
        <dbReference type="PDB" id="1ZOQ"/>
    </source>
</evidence>
<evidence type="ECO:0007829" key="70">
    <source>
        <dbReference type="PDB" id="2O61"/>
    </source>
</evidence>
<evidence type="ECO:0007829" key="71">
    <source>
        <dbReference type="PDB" id="2O6G"/>
    </source>
</evidence>
<evidence type="ECO:0007829" key="72">
    <source>
        <dbReference type="PDB" id="2PI0"/>
    </source>
</evidence>
<evidence type="ECO:0007829" key="73">
    <source>
        <dbReference type="PDB" id="3QU6"/>
    </source>
</evidence>
<evidence type="ECO:0007829" key="74">
    <source>
        <dbReference type="PDB" id="5JEJ"/>
    </source>
</evidence>
<evidence type="ECO:0007829" key="75">
    <source>
        <dbReference type="PDB" id="5JEL"/>
    </source>
</evidence>
<evidence type="ECO:0007829" key="76">
    <source>
        <dbReference type="PDB" id="5JEO"/>
    </source>
</evidence>
<evidence type="ECO:0007829" key="77">
    <source>
        <dbReference type="PDB" id="5JER"/>
    </source>
</evidence>
<evidence type="ECO:0007829" key="78">
    <source>
        <dbReference type="PDB" id="6SJA"/>
    </source>
</evidence>
<evidence type="ECO:0007829" key="79">
    <source>
        <dbReference type="PDB" id="7JFL"/>
    </source>
</evidence>
<protein>
    <recommendedName>
        <fullName evidence="57 58">Interferon regulatory factor 3</fullName>
        <shortName evidence="57">IRF-3</shortName>
    </recommendedName>
</protein>
<dbReference type="EMBL" id="Z56281">
    <property type="protein sequence ID" value="CAA91227.1"/>
    <property type="molecule type" value="mRNA"/>
</dbReference>
<dbReference type="EMBL" id="AB102884">
    <property type="protein sequence ID" value="BAD89413.1"/>
    <property type="molecule type" value="mRNA"/>
</dbReference>
<dbReference type="EMBL" id="AB102886">
    <property type="protein sequence ID" value="BAD89415.1"/>
    <property type="molecule type" value="mRNA"/>
</dbReference>
<dbReference type="EMBL" id="AB102887">
    <property type="protein sequence ID" value="BAD89416.1"/>
    <property type="molecule type" value="mRNA"/>
</dbReference>
<dbReference type="EMBL" id="AK292027">
    <property type="protein sequence ID" value="BAF84716.1"/>
    <property type="molecule type" value="mRNA"/>
</dbReference>
<dbReference type="EMBL" id="AK314421">
    <property type="protein sequence ID" value="BAG37040.1"/>
    <property type="molecule type" value="mRNA"/>
</dbReference>
<dbReference type="EMBL" id="AC011495">
    <property type="status" value="NOT_ANNOTATED_CDS"/>
    <property type="molecule type" value="Genomic_DNA"/>
</dbReference>
<dbReference type="EMBL" id="CH471177">
    <property type="protein sequence ID" value="EAW52510.1"/>
    <property type="molecule type" value="Genomic_DNA"/>
</dbReference>
<dbReference type="EMBL" id="BC000660">
    <property type="protein sequence ID" value="AAH00660.1"/>
    <property type="molecule type" value="mRNA"/>
</dbReference>
<dbReference type="EMBL" id="BC071721">
    <property type="protein sequence ID" value="AAH71721.1"/>
    <property type="molecule type" value="mRNA"/>
</dbReference>
<dbReference type="EMBL" id="U86636">
    <property type="protein sequence ID" value="AAC68818.1"/>
    <property type="molecule type" value="Genomic_DNA"/>
</dbReference>
<dbReference type="CCDS" id="CCDS12775.1">
    <molecule id="Q14653-1"/>
</dbReference>
<dbReference type="CCDS" id="CCDS56099.1">
    <molecule id="Q14653-2"/>
</dbReference>
<dbReference type="CCDS" id="CCDS59407.1">
    <molecule id="Q14653-3"/>
</dbReference>
<dbReference type="CCDS" id="CCDS59409.1">
    <molecule id="Q14653-4"/>
</dbReference>
<dbReference type="RefSeq" id="NP_001184051.1">
    <molecule id="Q14653-4"/>
    <property type="nucleotide sequence ID" value="NM_001197122.2"/>
</dbReference>
<dbReference type="RefSeq" id="NP_001184052.1">
    <property type="nucleotide sequence ID" value="NM_001197123.1"/>
</dbReference>
<dbReference type="RefSeq" id="NP_001184053.1">
    <molecule id="Q14653-2"/>
    <property type="nucleotide sequence ID" value="NM_001197124.2"/>
</dbReference>
<dbReference type="RefSeq" id="NP_001184054.1">
    <property type="nucleotide sequence ID" value="NM_001197125.1"/>
</dbReference>
<dbReference type="RefSeq" id="NP_001184055.1">
    <property type="nucleotide sequence ID" value="NM_001197126.1"/>
</dbReference>
<dbReference type="RefSeq" id="NP_001184056.1">
    <molecule id="Q14653-3"/>
    <property type="nucleotide sequence ID" value="NM_001197127.2"/>
</dbReference>
<dbReference type="RefSeq" id="NP_001184057.1">
    <molecule id="Q14653-3"/>
    <property type="nucleotide sequence ID" value="NM_001197128.2"/>
</dbReference>
<dbReference type="RefSeq" id="NP_001562.1">
    <molecule id="Q14653-1"/>
    <property type="nucleotide sequence ID" value="NM_001571.6"/>
</dbReference>
<dbReference type="RefSeq" id="XP_006723260.1">
    <molecule id="Q14653-4"/>
    <property type="nucleotide sequence ID" value="XM_006723197.1"/>
</dbReference>
<dbReference type="RefSeq" id="XP_006723261.1">
    <molecule id="Q14653-4"/>
    <property type="nucleotide sequence ID" value="XM_006723198.2"/>
</dbReference>
<dbReference type="RefSeq" id="XP_016882255.1">
    <molecule id="Q14653-1"/>
    <property type="nucleotide sequence ID" value="XM_017026766.2"/>
</dbReference>
<dbReference type="RefSeq" id="XP_016882256.1">
    <molecule id="Q14653-1"/>
    <property type="nucleotide sequence ID" value="XM_017026767.2"/>
</dbReference>
<dbReference type="PDB" id="1J2F">
    <property type="method" value="X-ray"/>
    <property type="resolution" value="2.30 A"/>
    <property type="chains" value="A/B=175-427"/>
</dbReference>
<dbReference type="PDB" id="1QWT">
    <property type="method" value="X-ray"/>
    <property type="resolution" value="2.10 A"/>
    <property type="chains" value="A/B=173-427"/>
</dbReference>
<dbReference type="PDB" id="1T2K">
    <property type="method" value="X-ray"/>
    <property type="resolution" value="3.00 A"/>
    <property type="chains" value="A/B=1-112"/>
</dbReference>
<dbReference type="PDB" id="1ZOQ">
    <property type="method" value="X-ray"/>
    <property type="resolution" value="2.37 A"/>
    <property type="chains" value="A/B=196-386"/>
</dbReference>
<dbReference type="PDB" id="2O61">
    <property type="method" value="X-ray"/>
    <property type="resolution" value="2.80 A"/>
    <property type="chains" value="A=9-111"/>
</dbReference>
<dbReference type="PDB" id="2O6G">
    <property type="method" value="X-ray"/>
    <property type="resolution" value="3.10 A"/>
    <property type="chains" value="E/F/G/H=1-123"/>
</dbReference>
<dbReference type="PDB" id="2PI0">
    <property type="method" value="X-ray"/>
    <property type="resolution" value="2.31 A"/>
    <property type="chains" value="A/B/C/D=1-113"/>
</dbReference>
<dbReference type="PDB" id="3A77">
    <property type="method" value="X-ray"/>
    <property type="resolution" value="1.80 A"/>
    <property type="chains" value="A/B/C/D=189-427"/>
</dbReference>
<dbReference type="PDB" id="3QU6">
    <property type="method" value="X-ray"/>
    <property type="resolution" value="2.30 A"/>
    <property type="chains" value="A/B/C=1-113"/>
</dbReference>
<dbReference type="PDB" id="5JEJ">
    <property type="method" value="X-ray"/>
    <property type="resolution" value="2.00 A"/>
    <property type="chains" value="A/B=189-427"/>
</dbReference>
<dbReference type="PDB" id="5JEK">
    <property type="method" value="X-ray"/>
    <property type="resolution" value="2.40 A"/>
    <property type="chains" value="A/B=189-427"/>
</dbReference>
<dbReference type="PDB" id="5JEL">
    <property type="method" value="X-ray"/>
    <property type="resolution" value="1.60 A"/>
    <property type="chains" value="A=189-427"/>
</dbReference>
<dbReference type="PDB" id="5JEM">
    <property type="method" value="X-ray"/>
    <property type="resolution" value="2.50 A"/>
    <property type="chains" value="A/B/E/G=189-398"/>
</dbReference>
<dbReference type="PDB" id="5JEO">
    <property type="method" value="X-ray"/>
    <property type="resolution" value="1.72 A"/>
    <property type="chains" value="A=189-427"/>
</dbReference>
<dbReference type="PDB" id="5JER">
    <property type="method" value="X-ray"/>
    <property type="resolution" value="2.91 A"/>
    <property type="chains" value="A/C/E/G=189-427"/>
</dbReference>
<dbReference type="PDB" id="6SIV">
    <property type="method" value="X-ray"/>
    <property type="resolution" value="1.75 A"/>
    <property type="chains" value="A=137-148"/>
</dbReference>
<dbReference type="PDB" id="6SJA">
    <property type="method" value="X-ray"/>
    <property type="resolution" value="1.50 A"/>
    <property type="chains" value="A=137-148"/>
</dbReference>
<dbReference type="PDB" id="7JFL">
    <property type="method" value="X-ray"/>
    <property type="resolution" value="1.68 A"/>
    <property type="chains" value="A/B=189-398"/>
</dbReference>
<dbReference type="PDBsum" id="1J2F"/>
<dbReference type="PDBsum" id="1QWT"/>
<dbReference type="PDBsum" id="1T2K"/>
<dbReference type="PDBsum" id="1ZOQ"/>
<dbReference type="PDBsum" id="2O61"/>
<dbReference type="PDBsum" id="2O6G"/>
<dbReference type="PDBsum" id="2PI0"/>
<dbReference type="PDBsum" id="3A77"/>
<dbReference type="PDBsum" id="3QU6"/>
<dbReference type="PDBsum" id="5JEJ"/>
<dbReference type="PDBsum" id="5JEK"/>
<dbReference type="PDBsum" id="5JEL"/>
<dbReference type="PDBsum" id="5JEM"/>
<dbReference type="PDBsum" id="5JEO"/>
<dbReference type="PDBsum" id="5JER"/>
<dbReference type="PDBsum" id="6SIV"/>
<dbReference type="PDBsum" id="6SJA"/>
<dbReference type="PDBsum" id="7JFL"/>
<dbReference type="SMR" id="Q14653"/>
<dbReference type="BioGRID" id="109869">
    <property type="interactions" value="147"/>
</dbReference>
<dbReference type="CORUM" id="Q14653"/>
<dbReference type="DIP" id="DIP-41448N"/>
<dbReference type="ELM" id="Q14653"/>
<dbReference type="FunCoup" id="Q14653">
    <property type="interactions" value="2244"/>
</dbReference>
<dbReference type="IntAct" id="Q14653">
    <property type="interactions" value="80"/>
</dbReference>
<dbReference type="MINT" id="Q14653"/>
<dbReference type="STRING" id="9606.ENSP00000471896"/>
<dbReference type="BindingDB" id="Q14653"/>
<dbReference type="ChEMBL" id="CHEMBL4523293"/>
<dbReference type="iPTMnet" id="Q14653"/>
<dbReference type="PhosphoSitePlus" id="Q14653"/>
<dbReference type="BioMuta" id="IRF3"/>
<dbReference type="DMDM" id="2497442"/>
<dbReference type="jPOST" id="Q14653"/>
<dbReference type="MassIVE" id="Q14653"/>
<dbReference type="PaxDb" id="9606-ENSP00000471896"/>
<dbReference type="PeptideAtlas" id="Q14653"/>
<dbReference type="ProteomicsDB" id="60091">
    <molecule id="Q14653-1"/>
</dbReference>
<dbReference type="ProteomicsDB" id="60092">
    <molecule id="Q14653-2"/>
</dbReference>
<dbReference type="ProteomicsDB" id="62791"/>
<dbReference type="Pumba" id="Q14653"/>
<dbReference type="Antibodypedia" id="1283">
    <property type="antibodies" value="1436 antibodies from 48 providers"/>
</dbReference>
<dbReference type="CPTC" id="Q14653">
    <property type="antibodies" value="1 antibody"/>
</dbReference>
<dbReference type="DNASU" id="3661"/>
<dbReference type="Ensembl" id="ENST00000309877.11">
    <molecule id="Q14653-1"/>
    <property type="protein sequence ID" value="ENSP00000310127.6"/>
    <property type="gene ID" value="ENSG00000126456.16"/>
</dbReference>
<dbReference type="Ensembl" id="ENST00000377139.8">
    <molecule id="Q14653-1"/>
    <property type="protein sequence ID" value="ENSP00000366344.3"/>
    <property type="gene ID" value="ENSG00000126456.16"/>
</dbReference>
<dbReference type="Ensembl" id="ENST00000442265.2">
    <molecule id="Q14653-5"/>
    <property type="protein sequence ID" value="ENSP00000400378.2"/>
    <property type="gene ID" value="ENSG00000126456.16"/>
</dbReference>
<dbReference type="Ensembl" id="ENST00000596765.5">
    <molecule id="Q14653-3"/>
    <property type="protein sequence ID" value="ENSP00000470512.1"/>
    <property type="gene ID" value="ENSG00000126456.16"/>
</dbReference>
<dbReference type="Ensembl" id="ENST00000597198.5">
    <molecule id="Q14653-1"/>
    <property type="protein sequence ID" value="ENSP00000469113.1"/>
    <property type="gene ID" value="ENSG00000126456.16"/>
</dbReference>
<dbReference type="Ensembl" id="ENST00000599223.5">
    <molecule id="Q14653-2"/>
    <property type="protein sequence ID" value="ENSP00000471358.1"/>
    <property type="gene ID" value="ENSG00000126456.16"/>
</dbReference>
<dbReference type="Ensembl" id="ENST00000600022.5">
    <molecule id="Q14653-3"/>
    <property type="protein sequence ID" value="ENSP00000472700.1"/>
    <property type="gene ID" value="ENSG00000126456.16"/>
</dbReference>
<dbReference type="Ensembl" id="ENST00000601291.5">
    <molecule id="Q14653-4"/>
    <property type="protein sequence ID" value="ENSP00000471896.1"/>
    <property type="gene ID" value="ENSG00000126456.16"/>
</dbReference>
<dbReference type="GeneID" id="3661"/>
<dbReference type="KEGG" id="hsa:3661"/>
<dbReference type="MANE-Select" id="ENST00000377139.8">
    <property type="protein sequence ID" value="ENSP00000366344.3"/>
    <property type="RefSeq nucleotide sequence ID" value="NM_001571.6"/>
    <property type="RefSeq protein sequence ID" value="NP_001562.1"/>
</dbReference>
<dbReference type="UCSC" id="uc002pot.3">
    <molecule id="Q14653-1"/>
    <property type="organism name" value="human"/>
</dbReference>
<dbReference type="AGR" id="HGNC:6118"/>
<dbReference type="CTD" id="3661"/>
<dbReference type="DisGeNET" id="3661"/>
<dbReference type="GeneCards" id="IRF3"/>
<dbReference type="HGNC" id="HGNC:6118">
    <property type="gene designation" value="IRF3"/>
</dbReference>
<dbReference type="HPA" id="ENSG00000126456">
    <property type="expression patterns" value="Low tissue specificity"/>
</dbReference>
<dbReference type="MalaCards" id="IRF3"/>
<dbReference type="MIM" id="603734">
    <property type="type" value="gene"/>
</dbReference>
<dbReference type="MIM" id="616532">
    <property type="type" value="phenotype"/>
</dbReference>
<dbReference type="neXtProt" id="NX_Q14653"/>
<dbReference type="OpenTargets" id="ENSG00000126456"/>
<dbReference type="PharmGKB" id="PA29917"/>
<dbReference type="VEuPathDB" id="HostDB:ENSG00000126456"/>
<dbReference type="eggNOG" id="ENOG502QTRR">
    <property type="taxonomic scope" value="Eukaryota"/>
</dbReference>
<dbReference type="GeneTree" id="ENSGT00940000160569"/>
<dbReference type="HOGENOM" id="CLU_031544_2_0_1"/>
<dbReference type="InParanoid" id="Q14653"/>
<dbReference type="OMA" id="DRGVMGY"/>
<dbReference type="OrthoDB" id="8691508at2759"/>
<dbReference type="PAN-GO" id="Q14653">
    <property type="GO annotations" value="5 GO annotations based on evolutionary models"/>
</dbReference>
<dbReference type="PhylomeDB" id="Q14653"/>
<dbReference type="TreeFam" id="TF328512"/>
<dbReference type="PathwayCommons" id="Q14653"/>
<dbReference type="Reactome" id="R-HSA-1169408">
    <property type="pathway name" value="ISG15 antiviral mechanism"/>
</dbReference>
<dbReference type="Reactome" id="R-HSA-1606341">
    <property type="pathway name" value="IRF3 mediated activation of type 1 IFN"/>
</dbReference>
<dbReference type="Reactome" id="R-HSA-168928">
    <property type="pathway name" value="DDX58/IFIH1-mediated induction of interferon-alpha/beta"/>
</dbReference>
<dbReference type="Reactome" id="R-HSA-3134973">
    <property type="pathway name" value="LRR FLII-interacting protein 1 (LRRFIP1) activates type I IFN production"/>
</dbReference>
<dbReference type="Reactome" id="R-HSA-3134975">
    <property type="pathway name" value="Regulation of innate immune responses to cytosolic DNA"/>
</dbReference>
<dbReference type="Reactome" id="R-HSA-3270619">
    <property type="pathway name" value="IRF3-mediated induction of type I IFN"/>
</dbReference>
<dbReference type="Reactome" id="R-HSA-877300">
    <property type="pathway name" value="Interferon gamma signaling"/>
</dbReference>
<dbReference type="Reactome" id="R-HSA-9013973">
    <property type="pathway name" value="TICAM1-dependent activation of IRF3/IRF7"/>
</dbReference>
<dbReference type="Reactome" id="R-HSA-909733">
    <property type="pathway name" value="Interferon alpha/beta signaling"/>
</dbReference>
<dbReference type="Reactome" id="R-HSA-918233">
    <property type="pathway name" value="TRAF3-dependent IRF activation pathway"/>
</dbReference>
<dbReference type="Reactome" id="R-HSA-933541">
    <property type="pathway name" value="TRAF6 mediated IRF7 activation"/>
</dbReference>
<dbReference type="Reactome" id="R-HSA-936440">
    <property type="pathway name" value="Negative regulators of DDX58/IFIH1 signaling"/>
</dbReference>
<dbReference type="Reactome" id="R-HSA-936964">
    <property type="pathway name" value="Activation of IRF3, IRF7 mediated by TBK1, IKKEpsilon (IKBKE)"/>
</dbReference>
<dbReference type="Reactome" id="R-HSA-9692916">
    <property type="pathway name" value="SARS-CoV-1 activates/modulates innate immune responses"/>
</dbReference>
<dbReference type="Reactome" id="R-HSA-9705671">
    <property type="pathway name" value="SARS-CoV-2 activates/modulates innate and adaptive immune responses"/>
</dbReference>
<dbReference type="Reactome" id="R-HSA-9833109">
    <property type="pathway name" value="Evasion by RSV of host interferon responses"/>
</dbReference>
<dbReference type="SignaLink" id="Q14653"/>
<dbReference type="SIGNOR" id="Q14653"/>
<dbReference type="BioGRID-ORCS" id="3661">
    <property type="hits" value="15 hits in 1188 CRISPR screens"/>
</dbReference>
<dbReference type="ChiTaRS" id="IRF3">
    <property type="organism name" value="human"/>
</dbReference>
<dbReference type="EvolutionaryTrace" id="Q14653"/>
<dbReference type="GeneWiki" id="IRF3"/>
<dbReference type="GenomeRNAi" id="3661"/>
<dbReference type="Pharos" id="Q14653">
    <property type="development level" value="Tbio"/>
</dbReference>
<dbReference type="PRO" id="PR:Q14653"/>
<dbReference type="Proteomes" id="UP000005640">
    <property type="component" value="Chromosome 19"/>
</dbReference>
<dbReference type="RNAct" id="Q14653">
    <property type="molecule type" value="protein"/>
</dbReference>
<dbReference type="Bgee" id="ENSG00000126456">
    <property type="expression patterns" value="Expressed in granulocyte and 181 other cell types or tissues"/>
</dbReference>
<dbReference type="ExpressionAtlas" id="Q14653">
    <property type="expression patterns" value="baseline and differential"/>
</dbReference>
<dbReference type="GO" id="GO:0000785">
    <property type="term" value="C:chromatin"/>
    <property type="evidence" value="ECO:0000314"/>
    <property type="project" value="UniProt"/>
</dbReference>
<dbReference type="GO" id="GO:0005737">
    <property type="term" value="C:cytoplasm"/>
    <property type="evidence" value="ECO:0000314"/>
    <property type="project" value="BHF-UCL"/>
</dbReference>
<dbReference type="GO" id="GO:0005829">
    <property type="term" value="C:cytosol"/>
    <property type="evidence" value="ECO:0000314"/>
    <property type="project" value="HPA"/>
</dbReference>
<dbReference type="GO" id="GO:0005739">
    <property type="term" value="C:mitochondrion"/>
    <property type="evidence" value="ECO:0000314"/>
    <property type="project" value="UniProtKB"/>
</dbReference>
<dbReference type="GO" id="GO:0005654">
    <property type="term" value="C:nucleoplasm"/>
    <property type="evidence" value="ECO:0000304"/>
    <property type="project" value="Reactome"/>
</dbReference>
<dbReference type="GO" id="GO:0005634">
    <property type="term" value="C:nucleus"/>
    <property type="evidence" value="ECO:0000314"/>
    <property type="project" value="BHF-UCL"/>
</dbReference>
<dbReference type="GO" id="GO:0003677">
    <property type="term" value="F:DNA binding"/>
    <property type="evidence" value="ECO:0000303"/>
    <property type="project" value="BHF-UCL"/>
</dbReference>
<dbReference type="GO" id="GO:0001216">
    <property type="term" value="F:DNA-binding transcription activator activity"/>
    <property type="evidence" value="ECO:0000314"/>
    <property type="project" value="UniProt"/>
</dbReference>
<dbReference type="GO" id="GO:0001228">
    <property type="term" value="F:DNA-binding transcription activator activity, RNA polymerase II-specific"/>
    <property type="evidence" value="ECO:0000315"/>
    <property type="project" value="NTNU_SB"/>
</dbReference>
<dbReference type="GO" id="GO:0003700">
    <property type="term" value="F:DNA-binding transcription factor activity"/>
    <property type="evidence" value="ECO:0000314"/>
    <property type="project" value="UniProt"/>
</dbReference>
<dbReference type="GO" id="GO:0000981">
    <property type="term" value="F:DNA-binding transcription factor activity, RNA polymerase II-specific"/>
    <property type="evidence" value="ECO:0000314"/>
    <property type="project" value="ARUK-UCL"/>
</dbReference>
<dbReference type="GO" id="GO:0001227">
    <property type="term" value="F:DNA-binding transcription repressor activity, RNA polymerase II-specific"/>
    <property type="evidence" value="ECO:0007669"/>
    <property type="project" value="Ensembl"/>
</dbReference>
<dbReference type="GO" id="GO:0042802">
    <property type="term" value="F:identical protein binding"/>
    <property type="evidence" value="ECO:0000353"/>
    <property type="project" value="IntAct"/>
</dbReference>
<dbReference type="GO" id="GO:1990841">
    <property type="term" value="F:promoter-specific chromatin binding"/>
    <property type="evidence" value="ECO:0007669"/>
    <property type="project" value="Ensembl"/>
</dbReference>
<dbReference type="GO" id="GO:0019904">
    <property type="term" value="F:protein domain specific binding"/>
    <property type="evidence" value="ECO:0000353"/>
    <property type="project" value="CAFA"/>
</dbReference>
<dbReference type="GO" id="GO:0042803">
    <property type="term" value="F:protein homodimerization activity"/>
    <property type="evidence" value="ECO:0000314"/>
    <property type="project" value="UniProtKB"/>
</dbReference>
<dbReference type="GO" id="GO:0000978">
    <property type="term" value="F:RNA polymerase II cis-regulatory region sequence-specific DNA binding"/>
    <property type="evidence" value="ECO:0000314"/>
    <property type="project" value="ARUK-UCL"/>
</dbReference>
<dbReference type="GO" id="GO:0043565">
    <property type="term" value="F:sequence-specific DNA binding"/>
    <property type="evidence" value="ECO:0000314"/>
    <property type="project" value="NTNU_SB"/>
</dbReference>
<dbReference type="GO" id="GO:1990837">
    <property type="term" value="F:sequence-specific double-stranded DNA binding"/>
    <property type="evidence" value="ECO:0000314"/>
    <property type="project" value="ARUK-UCL"/>
</dbReference>
<dbReference type="GO" id="GO:0140374">
    <property type="term" value="P:antiviral innate immune response"/>
    <property type="evidence" value="ECO:0000314"/>
    <property type="project" value="UniProt"/>
</dbReference>
<dbReference type="GO" id="GO:0006915">
    <property type="term" value="P:apoptotic process"/>
    <property type="evidence" value="ECO:0000304"/>
    <property type="project" value="UniProtKB"/>
</dbReference>
<dbReference type="GO" id="GO:0071360">
    <property type="term" value="P:cellular response to exogenous dsRNA"/>
    <property type="evidence" value="ECO:0007669"/>
    <property type="project" value="Ensembl"/>
</dbReference>
<dbReference type="GO" id="GO:0098586">
    <property type="term" value="P:cellular response to virus"/>
    <property type="evidence" value="ECO:0000314"/>
    <property type="project" value="UniProtKB"/>
</dbReference>
<dbReference type="GO" id="GO:0140896">
    <property type="term" value="P:cGAS/STING signaling pathway"/>
    <property type="evidence" value="ECO:0000304"/>
    <property type="project" value="FlyBase"/>
</dbReference>
<dbReference type="GO" id="GO:0002753">
    <property type="term" value="P:cytoplasmic pattern recognition receptor signaling pathway"/>
    <property type="evidence" value="ECO:0000314"/>
    <property type="project" value="UniProt"/>
</dbReference>
<dbReference type="GO" id="GO:0051607">
    <property type="term" value="P:defense response to virus"/>
    <property type="evidence" value="ECO:0000250"/>
    <property type="project" value="UniProtKB"/>
</dbReference>
<dbReference type="GO" id="GO:0006974">
    <property type="term" value="P:DNA damage response"/>
    <property type="evidence" value="ECO:0000304"/>
    <property type="project" value="UniProtKB"/>
</dbReference>
<dbReference type="GO" id="GO:0002376">
    <property type="term" value="P:immune system process"/>
    <property type="evidence" value="ECO:0000318"/>
    <property type="project" value="GO_Central"/>
</dbReference>
<dbReference type="GO" id="GO:0045087">
    <property type="term" value="P:innate immune response"/>
    <property type="evidence" value="ECO:0000304"/>
    <property type="project" value="FlyBase"/>
</dbReference>
<dbReference type="GO" id="GO:0031663">
    <property type="term" value="P:lipopolysaccharide-mediated signaling pathway"/>
    <property type="evidence" value="ECO:0007669"/>
    <property type="project" value="Ensembl"/>
</dbReference>
<dbReference type="GO" id="GO:0071888">
    <property type="term" value="P:macrophage apoptotic process"/>
    <property type="evidence" value="ECO:0000304"/>
    <property type="project" value="UniProtKB"/>
</dbReference>
<dbReference type="GO" id="GO:0039530">
    <property type="term" value="P:MDA-5 signaling pathway"/>
    <property type="evidence" value="ECO:0000304"/>
    <property type="project" value="UniProtKB"/>
</dbReference>
<dbReference type="GO" id="GO:0009299">
    <property type="term" value="P:mRNA transcription"/>
    <property type="evidence" value="ECO:0000314"/>
    <property type="project" value="UniProt"/>
</dbReference>
<dbReference type="GO" id="GO:0043123">
    <property type="term" value="P:positive regulation of canonical NF-kappaB signal transduction"/>
    <property type="evidence" value="ECO:0007669"/>
    <property type="project" value="Ensembl"/>
</dbReference>
<dbReference type="GO" id="GO:1900017">
    <property type="term" value="P:positive regulation of cytokine production involved in inflammatory response"/>
    <property type="evidence" value="ECO:0000304"/>
    <property type="project" value="FlyBase"/>
</dbReference>
<dbReference type="GO" id="GO:0032727">
    <property type="term" value="P:positive regulation of interferon-alpha production"/>
    <property type="evidence" value="ECO:0000250"/>
    <property type="project" value="UniProtKB"/>
</dbReference>
<dbReference type="GO" id="GO:0032728">
    <property type="term" value="P:positive regulation of interferon-beta production"/>
    <property type="evidence" value="ECO:0000250"/>
    <property type="project" value="UniProtKB"/>
</dbReference>
<dbReference type="GO" id="GO:0045944">
    <property type="term" value="P:positive regulation of transcription by RNA polymerase II"/>
    <property type="evidence" value="ECO:0000314"/>
    <property type="project" value="ARUK-UCL"/>
</dbReference>
<dbReference type="GO" id="GO:0032481">
    <property type="term" value="P:positive regulation of type I interferon production"/>
    <property type="evidence" value="ECO:0000314"/>
    <property type="project" value="UniProt"/>
</dbReference>
<dbReference type="GO" id="GO:0060340">
    <property type="term" value="P:positive regulation of type I interferon-mediated signaling pathway"/>
    <property type="evidence" value="ECO:0007669"/>
    <property type="project" value="Ensembl"/>
</dbReference>
<dbReference type="GO" id="GO:0097300">
    <property type="term" value="P:programmed necrotic cell death"/>
    <property type="evidence" value="ECO:0007669"/>
    <property type="project" value="Ensembl"/>
</dbReference>
<dbReference type="GO" id="GO:0042981">
    <property type="term" value="P:regulation of apoptotic process"/>
    <property type="evidence" value="ECO:0000314"/>
    <property type="project" value="UniProtKB"/>
</dbReference>
<dbReference type="GO" id="GO:0050727">
    <property type="term" value="P:regulation of inflammatory response"/>
    <property type="evidence" value="ECO:0007669"/>
    <property type="project" value="Ensembl"/>
</dbReference>
<dbReference type="GO" id="GO:0006357">
    <property type="term" value="P:regulation of transcription by RNA polymerase II"/>
    <property type="evidence" value="ECO:0000318"/>
    <property type="project" value="GO_Central"/>
</dbReference>
<dbReference type="GO" id="GO:0023019">
    <property type="term" value="P:signal transduction involved in regulation of gene expression"/>
    <property type="evidence" value="ECO:0000304"/>
    <property type="project" value="FlyBase"/>
</dbReference>
<dbReference type="GO" id="GO:0034142">
    <property type="term" value="P:toll-like receptor 4 signaling pathway"/>
    <property type="evidence" value="ECO:0000314"/>
    <property type="project" value="UniProt"/>
</dbReference>
<dbReference type="GO" id="GO:0035666">
    <property type="term" value="P:TRIF-dependent toll-like receptor signaling pathway"/>
    <property type="evidence" value="ECO:0000314"/>
    <property type="project" value="UniProtKB"/>
</dbReference>
<dbReference type="GO" id="GO:0060337">
    <property type="term" value="P:type I interferon-mediated signaling pathway"/>
    <property type="evidence" value="ECO:0007669"/>
    <property type="project" value="Ensembl"/>
</dbReference>
<dbReference type="CDD" id="cd00103">
    <property type="entry name" value="IRF"/>
    <property type="match status" value="1"/>
</dbReference>
<dbReference type="DisProt" id="DP01614"/>
<dbReference type="FunFam" id="1.10.10.10:FF:000263">
    <property type="entry name" value="Interferon regulatory factor 3"/>
    <property type="match status" value="1"/>
</dbReference>
<dbReference type="FunFam" id="2.60.200.10:FF:000008">
    <property type="entry name" value="Interferon regulatory factor 3"/>
    <property type="match status" value="1"/>
</dbReference>
<dbReference type="Gene3D" id="2.60.200.10">
    <property type="match status" value="1"/>
</dbReference>
<dbReference type="Gene3D" id="1.10.10.10">
    <property type="entry name" value="Winged helix-like DNA-binding domain superfamily/Winged helix DNA-binding domain"/>
    <property type="match status" value="1"/>
</dbReference>
<dbReference type="IDEAL" id="IID00079"/>
<dbReference type="InterPro" id="IPR019817">
    <property type="entry name" value="Interferon_reg_fac_CS"/>
</dbReference>
<dbReference type="InterPro" id="IPR001346">
    <property type="entry name" value="Interferon_reg_fact_DNA-bd_dom"/>
</dbReference>
<dbReference type="InterPro" id="IPR019471">
    <property type="entry name" value="Interferon_reg_factor-3"/>
</dbReference>
<dbReference type="InterPro" id="IPR017855">
    <property type="entry name" value="SMAD-like_dom_sf"/>
</dbReference>
<dbReference type="InterPro" id="IPR008984">
    <property type="entry name" value="SMAD_FHA_dom_sf"/>
</dbReference>
<dbReference type="InterPro" id="IPR036388">
    <property type="entry name" value="WH-like_DNA-bd_sf"/>
</dbReference>
<dbReference type="InterPro" id="IPR036390">
    <property type="entry name" value="WH_DNA-bd_sf"/>
</dbReference>
<dbReference type="PANTHER" id="PTHR11949">
    <property type="entry name" value="INTERFERON REGULATORY FACTOR"/>
    <property type="match status" value="1"/>
</dbReference>
<dbReference type="PANTHER" id="PTHR11949:SF1">
    <property type="entry name" value="INTERFERON REGULATORY FACTOR 3"/>
    <property type="match status" value="1"/>
</dbReference>
<dbReference type="Pfam" id="PF00605">
    <property type="entry name" value="IRF"/>
    <property type="match status" value="1"/>
</dbReference>
<dbReference type="Pfam" id="PF10401">
    <property type="entry name" value="IRF-3"/>
    <property type="match status" value="1"/>
</dbReference>
<dbReference type="PRINTS" id="PR00267">
    <property type="entry name" value="INTFRNREGFCT"/>
</dbReference>
<dbReference type="SMART" id="SM00348">
    <property type="entry name" value="IRF"/>
    <property type="match status" value="1"/>
</dbReference>
<dbReference type="SMART" id="SM01243">
    <property type="entry name" value="IRF-3"/>
    <property type="match status" value="1"/>
</dbReference>
<dbReference type="SUPFAM" id="SSF49879">
    <property type="entry name" value="SMAD/FHA domain"/>
    <property type="match status" value="1"/>
</dbReference>
<dbReference type="SUPFAM" id="SSF46785">
    <property type="entry name" value="Winged helix' DNA-binding domain"/>
    <property type="match status" value="1"/>
</dbReference>
<dbReference type="PROSITE" id="PS00601">
    <property type="entry name" value="IRF_1"/>
    <property type="match status" value="1"/>
</dbReference>
<dbReference type="PROSITE" id="PS51507">
    <property type="entry name" value="IRF_2"/>
    <property type="match status" value="1"/>
</dbReference>
<proteinExistence type="evidence at protein level"/>
<organism>
    <name type="scientific">Homo sapiens</name>
    <name type="common">Human</name>
    <dbReference type="NCBI Taxonomy" id="9606"/>
    <lineage>
        <taxon>Eukaryota</taxon>
        <taxon>Metazoa</taxon>
        <taxon>Chordata</taxon>
        <taxon>Craniata</taxon>
        <taxon>Vertebrata</taxon>
        <taxon>Euteleostomi</taxon>
        <taxon>Mammalia</taxon>
        <taxon>Eutheria</taxon>
        <taxon>Euarchontoglires</taxon>
        <taxon>Primates</taxon>
        <taxon>Haplorrhini</taxon>
        <taxon>Catarrhini</taxon>
        <taxon>Hominidae</taxon>
        <taxon>Homo</taxon>
    </lineage>
</organism>